<dbReference type="EMBL" id="U39226">
    <property type="protein sequence ID" value="AAB03679.1"/>
    <property type="molecule type" value="mRNA"/>
</dbReference>
<dbReference type="EMBL" id="U55208">
    <property type="protein sequence ID" value="AAC50927.1"/>
    <property type="molecule type" value="mRNA"/>
</dbReference>
<dbReference type="EMBL" id="U55209">
    <property type="protein sequence ID" value="AAC50722.1"/>
    <property type="molecule type" value="mRNA"/>
</dbReference>
<dbReference type="EMBL" id="AP000752">
    <property type="status" value="NOT_ANNOTATED_CDS"/>
    <property type="molecule type" value="Genomic_DNA"/>
</dbReference>
<dbReference type="EMBL" id="AP001855">
    <property type="status" value="NOT_ANNOTATED_CDS"/>
    <property type="molecule type" value="Genomic_DNA"/>
</dbReference>
<dbReference type="EMBL" id="L29146">
    <property type="protein sequence ID" value="AAA20909.1"/>
    <property type="molecule type" value="mRNA"/>
</dbReference>
<dbReference type="EMBL" id="U34227">
    <property type="protein sequence ID" value="AAC50218.1"/>
    <property type="molecule type" value="mRNA"/>
</dbReference>
<dbReference type="EMBL" id="BF869194">
    <property type="status" value="NOT_ANNOTATED_CDS"/>
    <property type="molecule type" value="mRNA"/>
</dbReference>
<dbReference type="EMBL" id="AH006665">
    <property type="protein sequence ID" value="AAC51150.1"/>
    <property type="molecule type" value="Genomic_DNA"/>
</dbReference>
<dbReference type="CCDS" id="CCDS53683.1">
    <molecule id="Q13402-1"/>
</dbReference>
<dbReference type="CCDS" id="CCDS53684.1">
    <molecule id="Q13402-2"/>
</dbReference>
<dbReference type="CCDS" id="CCDS91543.1">
    <molecule id="Q13402-8"/>
</dbReference>
<dbReference type="PIR" id="A59255">
    <property type="entry name" value="A59255"/>
</dbReference>
<dbReference type="PIR" id="A59257">
    <property type="entry name" value="A59257"/>
</dbReference>
<dbReference type="PIR" id="I61697">
    <property type="entry name" value="I61697"/>
</dbReference>
<dbReference type="RefSeq" id="NP_000251.3">
    <molecule id="Q13402-1"/>
    <property type="nucleotide sequence ID" value="NM_000260.4"/>
</dbReference>
<dbReference type="RefSeq" id="NP_001120652.1">
    <molecule id="Q13402-2"/>
    <property type="nucleotide sequence ID" value="NM_001127180.2"/>
</dbReference>
<dbReference type="RefSeq" id="NP_001356294.1">
    <molecule id="Q13402-8"/>
    <property type="nucleotide sequence ID" value="NM_001369365.1"/>
</dbReference>
<dbReference type="PDB" id="5MV9">
    <property type="method" value="X-ray"/>
    <property type="resolution" value="2.60 A"/>
    <property type="chains" value="A=1702-2215"/>
</dbReference>
<dbReference type="PDBsum" id="5MV9"/>
<dbReference type="SMR" id="Q13402"/>
<dbReference type="BioGRID" id="110731">
    <property type="interactions" value="26"/>
</dbReference>
<dbReference type="CORUM" id="Q13402"/>
<dbReference type="ELM" id="Q13402"/>
<dbReference type="FunCoup" id="Q13402">
    <property type="interactions" value="510"/>
</dbReference>
<dbReference type="IntAct" id="Q13402">
    <property type="interactions" value="7"/>
</dbReference>
<dbReference type="MINT" id="Q13402"/>
<dbReference type="STRING" id="9606.ENSP00000386331"/>
<dbReference type="GlyGen" id="Q13402">
    <property type="glycosylation" value="1 site, 4 N-linked glycans (1 site)"/>
</dbReference>
<dbReference type="iPTMnet" id="Q13402"/>
<dbReference type="PhosphoSitePlus" id="Q13402"/>
<dbReference type="BioMuta" id="MYO7A"/>
<dbReference type="DMDM" id="460018219"/>
<dbReference type="jPOST" id="Q13402"/>
<dbReference type="MassIVE" id="Q13402"/>
<dbReference type="PaxDb" id="9606-ENSP00000386331"/>
<dbReference type="PeptideAtlas" id="Q13402"/>
<dbReference type="ProteomicsDB" id="28745"/>
<dbReference type="ProteomicsDB" id="59375">
    <molecule id="Q13402-1"/>
</dbReference>
<dbReference type="ProteomicsDB" id="59376">
    <molecule id="Q13402-2"/>
</dbReference>
<dbReference type="ProteomicsDB" id="59377">
    <molecule id="Q13402-3"/>
</dbReference>
<dbReference type="ProteomicsDB" id="59378">
    <molecule id="Q13402-4"/>
</dbReference>
<dbReference type="ProteomicsDB" id="59379">
    <molecule id="Q13402-5"/>
</dbReference>
<dbReference type="ProteomicsDB" id="59380">
    <molecule id="Q13402-6"/>
</dbReference>
<dbReference type="ProteomicsDB" id="59381">
    <molecule id="Q13402-7"/>
</dbReference>
<dbReference type="ProteomicsDB" id="7477"/>
<dbReference type="Antibodypedia" id="31226">
    <property type="antibodies" value="194 antibodies from 31 providers"/>
</dbReference>
<dbReference type="DNASU" id="4647"/>
<dbReference type="Ensembl" id="ENST00000409619.6">
    <molecule id="Q13402-8"/>
    <property type="protein sequence ID" value="ENSP00000386635.2"/>
    <property type="gene ID" value="ENSG00000137474.23"/>
</dbReference>
<dbReference type="Ensembl" id="ENST00000409709.9">
    <molecule id="Q13402-1"/>
    <property type="protein sequence ID" value="ENSP00000386331.3"/>
    <property type="gene ID" value="ENSG00000137474.23"/>
</dbReference>
<dbReference type="Ensembl" id="ENST00000458637.6">
    <molecule id="Q13402-2"/>
    <property type="protein sequence ID" value="ENSP00000392185.2"/>
    <property type="gene ID" value="ENSG00000137474.23"/>
</dbReference>
<dbReference type="GeneID" id="4647"/>
<dbReference type="KEGG" id="hsa:4647"/>
<dbReference type="MANE-Select" id="ENST00000409709.9">
    <property type="protein sequence ID" value="ENSP00000386331.3"/>
    <property type="RefSeq nucleotide sequence ID" value="NM_000260.4"/>
    <property type="RefSeq protein sequence ID" value="NP_000251.3"/>
</dbReference>
<dbReference type="UCSC" id="uc001oyb.3">
    <molecule id="Q13402-1"/>
    <property type="organism name" value="human"/>
</dbReference>
<dbReference type="AGR" id="HGNC:7606"/>
<dbReference type="CTD" id="4647"/>
<dbReference type="DisGeNET" id="4647"/>
<dbReference type="GeneCards" id="MYO7A"/>
<dbReference type="GeneReviews" id="MYO7A"/>
<dbReference type="HGNC" id="HGNC:7606">
    <property type="gene designation" value="MYO7A"/>
</dbReference>
<dbReference type="HPA" id="ENSG00000137474">
    <property type="expression patterns" value="Tissue enhanced (adrenal)"/>
</dbReference>
<dbReference type="MalaCards" id="MYO7A"/>
<dbReference type="MIM" id="276900">
    <property type="type" value="phenotype"/>
</dbReference>
<dbReference type="MIM" id="276903">
    <property type="type" value="gene"/>
</dbReference>
<dbReference type="MIM" id="600060">
    <property type="type" value="phenotype"/>
</dbReference>
<dbReference type="MIM" id="601317">
    <property type="type" value="phenotype"/>
</dbReference>
<dbReference type="neXtProt" id="NX_Q13402"/>
<dbReference type="OpenTargets" id="ENSG00000137474"/>
<dbReference type="Orphanet" id="90635">
    <property type="disease" value="Rare autosomal dominant non-syndromic sensorineural deafness type DFNA"/>
</dbReference>
<dbReference type="Orphanet" id="90636">
    <property type="disease" value="Rare autosomal recessive non-syndromic sensorineural deafness type DFNB"/>
</dbReference>
<dbReference type="Orphanet" id="231169">
    <property type="disease" value="Usher syndrome type 1"/>
</dbReference>
<dbReference type="Orphanet" id="231178">
    <property type="disease" value="Usher syndrome type 2"/>
</dbReference>
<dbReference type="PharmGKB" id="PA31411"/>
<dbReference type="VEuPathDB" id="HostDB:ENSG00000137474"/>
<dbReference type="eggNOG" id="KOG4229">
    <property type="taxonomic scope" value="Eukaryota"/>
</dbReference>
<dbReference type="GeneTree" id="ENSGT00940000155350"/>
<dbReference type="HOGENOM" id="CLU_000192_14_1_1"/>
<dbReference type="InParanoid" id="Q13402"/>
<dbReference type="OMA" id="TGFQGRC"/>
<dbReference type="OrthoDB" id="10055605at2759"/>
<dbReference type="PAN-GO" id="Q13402">
    <property type="GO annotations" value="10 GO annotations based on evolutionary models"/>
</dbReference>
<dbReference type="PhylomeDB" id="Q13402"/>
<dbReference type="TreeFam" id="TF335306"/>
<dbReference type="PathwayCommons" id="Q13402"/>
<dbReference type="Reactome" id="R-HSA-2453902">
    <property type="pathway name" value="The canonical retinoid cycle in rods (twilight vision)"/>
</dbReference>
<dbReference type="Reactome" id="R-HSA-9662360">
    <property type="pathway name" value="Sensory processing of sound by inner hair cells of the cochlea"/>
</dbReference>
<dbReference type="Reactome" id="R-HSA-9662361">
    <property type="pathway name" value="Sensory processing of sound by outer hair cells of the cochlea"/>
</dbReference>
<dbReference type="SignaLink" id="Q13402"/>
<dbReference type="SIGNOR" id="Q13402"/>
<dbReference type="BioGRID-ORCS" id="4647">
    <property type="hits" value="15 hits in 1150 CRISPR screens"/>
</dbReference>
<dbReference type="CD-CODE" id="F345034F">
    <property type="entry name" value="Signaling cluster"/>
</dbReference>
<dbReference type="ChiTaRS" id="MYO7A">
    <property type="organism name" value="human"/>
</dbReference>
<dbReference type="GeneWiki" id="MYO7A"/>
<dbReference type="GenomeRNAi" id="4647"/>
<dbReference type="Pharos" id="Q13402">
    <property type="development level" value="Tbio"/>
</dbReference>
<dbReference type="PRO" id="PR:Q13402"/>
<dbReference type="Proteomes" id="UP000005640">
    <property type="component" value="Chromosome 11"/>
</dbReference>
<dbReference type="RNAct" id="Q13402">
    <property type="molecule type" value="protein"/>
</dbReference>
<dbReference type="Bgee" id="ENSG00000137474">
    <property type="expression patterns" value="Expressed in right adrenal gland cortex and 127 other cell types or tissues"/>
</dbReference>
<dbReference type="ExpressionAtlas" id="Q13402">
    <property type="expression patterns" value="baseline and differential"/>
</dbReference>
<dbReference type="GO" id="GO:0015629">
    <property type="term" value="C:actin cytoskeleton"/>
    <property type="evidence" value="ECO:0000318"/>
    <property type="project" value="GO_Central"/>
</dbReference>
<dbReference type="GO" id="GO:0016324">
    <property type="term" value="C:apical plasma membrane"/>
    <property type="evidence" value="ECO:0007669"/>
    <property type="project" value="Ensembl"/>
</dbReference>
<dbReference type="GO" id="GO:0005938">
    <property type="term" value="C:cell cortex"/>
    <property type="evidence" value="ECO:0007669"/>
    <property type="project" value="UniProtKB-SubCell"/>
</dbReference>
<dbReference type="GO" id="GO:0005737">
    <property type="term" value="C:cytoplasm"/>
    <property type="evidence" value="ECO:0000314"/>
    <property type="project" value="MGI"/>
</dbReference>
<dbReference type="GO" id="GO:0005829">
    <property type="term" value="C:cytosol"/>
    <property type="evidence" value="ECO:0000314"/>
    <property type="project" value="UniProtKB"/>
</dbReference>
<dbReference type="GO" id="GO:0005765">
    <property type="term" value="C:lysosomal membrane"/>
    <property type="evidence" value="ECO:0000314"/>
    <property type="project" value="UniProtKB"/>
</dbReference>
<dbReference type="GO" id="GO:0042470">
    <property type="term" value="C:melanosome"/>
    <property type="evidence" value="ECO:0007669"/>
    <property type="project" value="Ensembl"/>
</dbReference>
<dbReference type="GO" id="GO:0016020">
    <property type="term" value="C:membrane"/>
    <property type="evidence" value="ECO:0000318"/>
    <property type="project" value="GO_Central"/>
</dbReference>
<dbReference type="GO" id="GO:0005902">
    <property type="term" value="C:microvillus"/>
    <property type="evidence" value="ECO:0000318"/>
    <property type="project" value="GO_Central"/>
</dbReference>
<dbReference type="GO" id="GO:0031477">
    <property type="term" value="C:myosin VII complex"/>
    <property type="evidence" value="ECO:0007669"/>
    <property type="project" value="Ensembl"/>
</dbReference>
<dbReference type="GO" id="GO:0032391">
    <property type="term" value="C:photoreceptor connecting cilium"/>
    <property type="evidence" value="ECO:0007669"/>
    <property type="project" value="Ensembl"/>
</dbReference>
<dbReference type="GO" id="GO:0001917">
    <property type="term" value="C:photoreceptor inner segment"/>
    <property type="evidence" value="ECO:0000314"/>
    <property type="project" value="UniProtKB"/>
</dbReference>
<dbReference type="GO" id="GO:0001750">
    <property type="term" value="C:photoreceptor outer segment"/>
    <property type="evidence" value="ECO:0000314"/>
    <property type="project" value="UniProtKB"/>
</dbReference>
<dbReference type="GO" id="GO:0032420">
    <property type="term" value="C:stereocilium"/>
    <property type="evidence" value="ECO:0000250"/>
    <property type="project" value="UniProtKB"/>
</dbReference>
<dbReference type="GO" id="GO:0120044">
    <property type="term" value="C:stereocilium base"/>
    <property type="evidence" value="ECO:0000250"/>
    <property type="project" value="UniProtKB"/>
</dbReference>
<dbReference type="GO" id="GO:0045202">
    <property type="term" value="C:synapse"/>
    <property type="evidence" value="ECO:0000314"/>
    <property type="project" value="UniProtKB"/>
</dbReference>
<dbReference type="GO" id="GO:1990435">
    <property type="term" value="C:upper tip-link density"/>
    <property type="evidence" value="ECO:0007669"/>
    <property type="project" value="Ensembl"/>
</dbReference>
<dbReference type="GO" id="GO:0051015">
    <property type="term" value="F:actin filament binding"/>
    <property type="evidence" value="ECO:0000314"/>
    <property type="project" value="UniProtKB"/>
</dbReference>
<dbReference type="GO" id="GO:0043531">
    <property type="term" value="F:ADP binding"/>
    <property type="evidence" value="ECO:0007669"/>
    <property type="project" value="Ensembl"/>
</dbReference>
<dbReference type="GO" id="GO:0005524">
    <property type="term" value="F:ATP binding"/>
    <property type="evidence" value="ECO:0007669"/>
    <property type="project" value="UniProtKB-KW"/>
</dbReference>
<dbReference type="GO" id="GO:0005516">
    <property type="term" value="F:calmodulin binding"/>
    <property type="evidence" value="ECO:0000315"/>
    <property type="project" value="UniProtKB"/>
</dbReference>
<dbReference type="GO" id="GO:0042802">
    <property type="term" value="F:identical protein binding"/>
    <property type="evidence" value="ECO:0007669"/>
    <property type="project" value="Ensembl"/>
</dbReference>
<dbReference type="GO" id="GO:0000146">
    <property type="term" value="F:microfilament motor activity"/>
    <property type="evidence" value="ECO:0000314"/>
    <property type="project" value="UniProtKB"/>
</dbReference>
<dbReference type="GO" id="GO:0019904">
    <property type="term" value="F:protein domain specific binding"/>
    <property type="evidence" value="ECO:0007669"/>
    <property type="project" value="Ensembl"/>
</dbReference>
<dbReference type="GO" id="GO:0030507">
    <property type="term" value="F:spectrin binding"/>
    <property type="evidence" value="ECO:0000314"/>
    <property type="project" value="MGI"/>
</dbReference>
<dbReference type="GO" id="GO:0007015">
    <property type="term" value="P:actin filament organization"/>
    <property type="evidence" value="ECO:0000318"/>
    <property type="project" value="GO_Central"/>
</dbReference>
<dbReference type="GO" id="GO:0030048">
    <property type="term" value="P:actin filament-based movement"/>
    <property type="evidence" value="ECO:0000314"/>
    <property type="project" value="UniProtKB"/>
</dbReference>
<dbReference type="GO" id="GO:0060088">
    <property type="term" value="P:auditory receptor cell stereocilium organization"/>
    <property type="evidence" value="ECO:0007669"/>
    <property type="project" value="Ensembl"/>
</dbReference>
<dbReference type="GO" id="GO:0090102">
    <property type="term" value="P:cochlea development"/>
    <property type="evidence" value="ECO:0007669"/>
    <property type="project" value="Ensembl"/>
</dbReference>
<dbReference type="GO" id="GO:0050957">
    <property type="term" value="P:equilibrioception"/>
    <property type="evidence" value="ECO:0000315"/>
    <property type="project" value="HGNC-UCL"/>
</dbReference>
<dbReference type="GO" id="GO:0042462">
    <property type="term" value="P:eye photoreceptor cell development"/>
    <property type="evidence" value="ECO:0000305"/>
    <property type="project" value="UniProtKB"/>
</dbReference>
<dbReference type="GO" id="GO:0006886">
    <property type="term" value="P:intracellular protein transport"/>
    <property type="evidence" value="ECO:0007669"/>
    <property type="project" value="Ensembl"/>
</dbReference>
<dbReference type="GO" id="GO:0007040">
    <property type="term" value="P:lysosome organization"/>
    <property type="evidence" value="ECO:0000314"/>
    <property type="project" value="UniProtKB"/>
</dbReference>
<dbReference type="GO" id="GO:0042490">
    <property type="term" value="P:mechanoreceptor differentiation"/>
    <property type="evidence" value="ECO:0000250"/>
    <property type="project" value="UniProtKB"/>
</dbReference>
<dbReference type="GO" id="GO:0001845">
    <property type="term" value="P:phagolysosome assembly"/>
    <property type="evidence" value="ECO:0007669"/>
    <property type="project" value="Ensembl"/>
</dbReference>
<dbReference type="GO" id="GO:0051904">
    <property type="term" value="P:pigment granule transport"/>
    <property type="evidence" value="ECO:0007669"/>
    <property type="project" value="Ensembl"/>
</dbReference>
<dbReference type="GO" id="GO:0008104">
    <property type="term" value="P:protein localization"/>
    <property type="evidence" value="ECO:0000250"/>
    <property type="project" value="UniProtKB"/>
</dbReference>
<dbReference type="GO" id="GO:0050953">
    <property type="term" value="P:sensory perception of light stimulus"/>
    <property type="evidence" value="ECO:0000315"/>
    <property type="project" value="HGNC-UCL"/>
</dbReference>
<dbReference type="GO" id="GO:0007605">
    <property type="term" value="P:sensory perception of sound"/>
    <property type="evidence" value="ECO:0000315"/>
    <property type="project" value="UniProtKB"/>
</dbReference>
<dbReference type="GO" id="GO:0007601">
    <property type="term" value="P:visual perception"/>
    <property type="evidence" value="ECO:0000315"/>
    <property type="project" value="UniProtKB"/>
</dbReference>
<dbReference type="CDD" id="cd17092">
    <property type="entry name" value="FERM1_F1_Myosin-VII"/>
    <property type="match status" value="1"/>
</dbReference>
<dbReference type="CDD" id="cd17093">
    <property type="entry name" value="FERM2_F1_Myosin-VII"/>
    <property type="match status" value="1"/>
</dbReference>
<dbReference type="CDD" id="cd14473">
    <property type="entry name" value="FERM_B-lobe"/>
    <property type="match status" value="2"/>
</dbReference>
<dbReference type="CDD" id="cd13198">
    <property type="entry name" value="FERM_C1_MyoVII"/>
    <property type="match status" value="1"/>
</dbReference>
<dbReference type="CDD" id="cd13199">
    <property type="entry name" value="FERM_C2_MyoVII"/>
    <property type="match status" value="1"/>
</dbReference>
<dbReference type="CDD" id="cd01381">
    <property type="entry name" value="MYSc_Myo7"/>
    <property type="match status" value="1"/>
</dbReference>
<dbReference type="CDD" id="cd22249">
    <property type="entry name" value="UDM1_RNF168_RNF169-like"/>
    <property type="match status" value="1"/>
</dbReference>
<dbReference type="FunFam" id="1.10.10.820:FF:000001">
    <property type="entry name" value="Myosin heavy chain"/>
    <property type="match status" value="1"/>
</dbReference>
<dbReference type="FunFam" id="1.20.5.190:FF:000012">
    <property type="entry name" value="Myosin VIIA"/>
    <property type="match status" value="1"/>
</dbReference>
<dbReference type="FunFam" id="1.20.80.10:FF:000012">
    <property type="entry name" value="Myosin VIIA"/>
    <property type="match status" value="1"/>
</dbReference>
<dbReference type="FunFam" id="1.25.40.530:FF:000004">
    <property type="entry name" value="Myosin VIIA"/>
    <property type="match status" value="1"/>
</dbReference>
<dbReference type="FunFam" id="3.40.850.10:FF:000007">
    <property type="entry name" value="Myosin VIIA"/>
    <property type="match status" value="1"/>
</dbReference>
<dbReference type="FunFam" id="1.20.120.720:FF:000008">
    <property type="entry name" value="Unconventional myosin-VIIa"/>
    <property type="match status" value="1"/>
</dbReference>
<dbReference type="FunFam" id="1.20.80.10:FF:000013">
    <property type="entry name" value="Unconventional myosin-VIIa"/>
    <property type="match status" value="1"/>
</dbReference>
<dbReference type="FunFam" id="3.10.20.90:FF:000036">
    <property type="entry name" value="Unconventional myosin-VIIa"/>
    <property type="match status" value="1"/>
</dbReference>
<dbReference type="FunFam" id="3.10.20.90:FF:000051">
    <property type="entry name" value="Unconventional myosin-VIIa"/>
    <property type="match status" value="1"/>
</dbReference>
<dbReference type="FunFam" id="2.30.29.30:FF:000079">
    <property type="entry name" value="unconventional myosin-VIIa"/>
    <property type="match status" value="1"/>
</dbReference>
<dbReference type="FunFam" id="2.30.30.40:FF:000113">
    <property type="entry name" value="unconventional myosin-VIIa"/>
    <property type="match status" value="1"/>
</dbReference>
<dbReference type="Gene3D" id="1.10.10.820">
    <property type="match status" value="1"/>
</dbReference>
<dbReference type="Gene3D" id="1.20.5.190">
    <property type="match status" value="1"/>
</dbReference>
<dbReference type="Gene3D" id="1.20.58.530">
    <property type="match status" value="1"/>
</dbReference>
<dbReference type="Gene3D" id="1.20.80.10">
    <property type="match status" value="2"/>
</dbReference>
<dbReference type="Gene3D" id="6.20.240.20">
    <property type="match status" value="1"/>
</dbReference>
<dbReference type="Gene3D" id="3.40.850.10">
    <property type="entry name" value="Kinesin motor domain"/>
    <property type="match status" value="1"/>
</dbReference>
<dbReference type="Gene3D" id="1.20.120.720">
    <property type="entry name" value="Myosin VI head, motor domain, U50 subdomain"/>
    <property type="match status" value="1"/>
</dbReference>
<dbReference type="Gene3D" id="1.25.40.530">
    <property type="entry name" value="MyTH4 domain"/>
    <property type="match status" value="2"/>
</dbReference>
<dbReference type="Gene3D" id="3.10.20.90">
    <property type="entry name" value="Phosphatidylinositol 3-kinase Catalytic Subunit, Chain A, domain 1"/>
    <property type="match status" value="2"/>
</dbReference>
<dbReference type="Gene3D" id="2.30.29.30">
    <property type="entry name" value="Pleckstrin-homology domain (PH domain)/Phosphotyrosine-binding domain (PTB)"/>
    <property type="match status" value="2"/>
</dbReference>
<dbReference type="Gene3D" id="2.30.30.40">
    <property type="entry name" value="SH3 Domains"/>
    <property type="match status" value="1"/>
</dbReference>
<dbReference type="InterPro" id="IPR019749">
    <property type="entry name" value="Band_41_domain"/>
</dbReference>
<dbReference type="InterPro" id="IPR014352">
    <property type="entry name" value="FERM/acyl-CoA-bd_prot_sf"/>
</dbReference>
<dbReference type="InterPro" id="IPR035963">
    <property type="entry name" value="FERM_2"/>
</dbReference>
<dbReference type="InterPro" id="IPR019748">
    <property type="entry name" value="FERM_central"/>
</dbReference>
<dbReference type="InterPro" id="IPR000299">
    <property type="entry name" value="FERM_domain"/>
</dbReference>
<dbReference type="InterPro" id="IPR000048">
    <property type="entry name" value="IQ_motif_EF-hand-BS"/>
</dbReference>
<dbReference type="InterPro" id="IPR002404">
    <property type="entry name" value="IRS_PTB"/>
</dbReference>
<dbReference type="InterPro" id="IPR036961">
    <property type="entry name" value="Kinesin_motor_dom_sf"/>
</dbReference>
<dbReference type="InterPro" id="IPR001609">
    <property type="entry name" value="Myosin_head_motor_dom-like"/>
</dbReference>
<dbReference type="InterPro" id="IPR041793">
    <property type="entry name" value="MyoVII_FERM_C1"/>
</dbReference>
<dbReference type="InterPro" id="IPR041794">
    <property type="entry name" value="MyoVII_FERM_C2"/>
</dbReference>
<dbReference type="InterPro" id="IPR036106">
    <property type="entry name" value="MYSc_Myo7"/>
</dbReference>
<dbReference type="InterPro" id="IPR000857">
    <property type="entry name" value="MyTH4_dom"/>
</dbReference>
<dbReference type="InterPro" id="IPR038185">
    <property type="entry name" value="MyTH4_dom_sf"/>
</dbReference>
<dbReference type="InterPro" id="IPR027417">
    <property type="entry name" value="P-loop_NTPase"/>
</dbReference>
<dbReference type="InterPro" id="IPR011993">
    <property type="entry name" value="PH-like_dom_sf"/>
</dbReference>
<dbReference type="InterPro" id="IPR036028">
    <property type="entry name" value="SH3-like_dom_sf"/>
</dbReference>
<dbReference type="InterPro" id="IPR001452">
    <property type="entry name" value="SH3_domain"/>
</dbReference>
<dbReference type="InterPro" id="IPR029071">
    <property type="entry name" value="Ubiquitin-like_domsf"/>
</dbReference>
<dbReference type="InterPro" id="IPR051567">
    <property type="entry name" value="Unconventional_Myosin_ATPase"/>
</dbReference>
<dbReference type="PANTHER" id="PTHR22692">
    <property type="entry name" value="MYOSIN VII, XV"/>
    <property type="match status" value="1"/>
</dbReference>
<dbReference type="PANTHER" id="PTHR22692:SF34">
    <property type="entry name" value="MYOSIN VIIA"/>
    <property type="match status" value="1"/>
</dbReference>
<dbReference type="Pfam" id="PF21998">
    <property type="entry name" value="FERM_C1_MyoVII"/>
    <property type="match status" value="2"/>
</dbReference>
<dbReference type="Pfam" id="PF00373">
    <property type="entry name" value="FERM_M"/>
    <property type="match status" value="1"/>
</dbReference>
<dbReference type="Pfam" id="PF00612">
    <property type="entry name" value="IQ"/>
    <property type="match status" value="2"/>
</dbReference>
<dbReference type="Pfam" id="PF02174">
    <property type="entry name" value="IRS"/>
    <property type="match status" value="1"/>
</dbReference>
<dbReference type="Pfam" id="PF00063">
    <property type="entry name" value="Myosin_head"/>
    <property type="match status" value="1"/>
</dbReference>
<dbReference type="Pfam" id="PF24123">
    <property type="entry name" value="Myosin_VII_N"/>
    <property type="match status" value="1"/>
</dbReference>
<dbReference type="Pfam" id="PF00784">
    <property type="entry name" value="MyTH4"/>
    <property type="match status" value="2"/>
</dbReference>
<dbReference type="Pfam" id="PF21989">
    <property type="entry name" value="RA_2"/>
    <property type="match status" value="2"/>
</dbReference>
<dbReference type="PRINTS" id="PR00193">
    <property type="entry name" value="MYOSINHEAVY"/>
</dbReference>
<dbReference type="SMART" id="SM00295">
    <property type="entry name" value="B41"/>
    <property type="match status" value="2"/>
</dbReference>
<dbReference type="SMART" id="SM00015">
    <property type="entry name" value="IQ"/>
    <property type="match status" value="4"/>
</dbReference>
<dbReference type="SMART" id="SM00242">
    <property type="entry name" value="MYSc"/>
    <property type="match status" value="1"/>
</dbReference>
<dbReference type="SMART" id="SM00139">
    <property type="entry name" value="MyTH4"/>
    <property type="match status" value="2"/>
</dbReference>
<dbReference type="SMART" id="SM00326">
    <property type="entry name" value="SH3"/>
    <property type="match status" value="1"/>
</dbReference>
<dbReference type="SUPFAM" id="SSF52540">
    <property type="entry name" value="P-loop containing nucleoside triphosphate hydrolases"/>
    <property type="match status" value="2"/>
</dbReference>
<dbReference type="SUPFAM" id="SSF50729">
    <property type="entry name" value="PH domain-like"/>
    <property type="match status" value="1"/>
</dbReference>
<dbReference type="SUPFAM" id="SSF47031">
    <property type="entry name" value="Second domain of FERM"/>
    <property type="match status" value="2"/>
</dbReference>
<dbReference type="SUPFAM" id="SSF50044">
    <property type="entry name" value="SH3-domain"/>
    <property type="match status" value="1"/>
</dbReference>
<dbReference type="SUPFAM" id="SSF54236">
    <property type="entry name" value="Ubiquitin-like"/>
    <property type="match status" value="2"/>
</dbReference>
<dbReference type="PROSITE" id="PS50057">
    <property type="entry name" value="FERM_3"/>
    <property type="match status" value="2"/>
</dbReference>
<dbReference type="PROSITE" id="PS50096">
    <property type="entry name" value="IQ"/>
    <property type="match status" value="3"/>
</dbReference>
<dbReference type="PROSITE" id="PS51456">
    <property type="entry name" value="MYOSIN_MOTOR"/>
    <property type="match status" value="1"/>
</dbReference>
<dbReference type="PROSITE" id="PS51016">
    <property type="entry name" value="MYTH4"/>
    <property type="match status" value="2"/>
</dbReference>
<dbReference type="PROSITE" id="PS50002">
    <property type="entry name" value="SH3"/>
    <property type="match status" value="1"/>
</dbReference>
<accession>Q13402</accession>
<accession>B9A011</accession>
<accession>F8VUN5</accession>
<accession>P78427</accession>
<accession>Q13321</accession>
<accession>Q14785</accession>
<accession>Q92821</accession>
<accession>Q92822</accession>
<comment type="function">
    <text evidence="1 19 20 21 22">Myosins are actin-based motor molecules with ATPase activity. Unconventional myosins serve in intracellular movements. Their highly divergent tails bind to membranous compartments, which are then moved relative to actin filaments. In the retina, plays an important role in the renewal of the outer photoreceptor disks. Plays an important role in the distribution and migration of retinal pigment epithelial (RPE) melanosomes and phagosomes, and in the regulation of opsin transport in retinal photoreceptors. In the inner ear, plays an important role in differentiation, morphogenesis and organization of cochlear hair cell bundles. Involved in hair-cell vesicle trafficking of aminoglycosides, which are known to induce ototoxicity (By similarity). Motor protein that is a part of the functional network formed by USH1C, USH1G, CDH23 and MYO7A that mediates mechanotransduction in cochlear hair cells. Required for normal hearing.</text>
</comment>
<comment type="activity regulation">
    <text evidence="21">ATP hydrolysis is inhibited by Mg(2+), already at a concentration of 0.4 mM.</text>
</comment>
<comment type="subunit">
    <text evidence="1 2 12 16 20 22 24 32">Might homodimerize in a two headed molecule through the formation of a coiled-coil rod (By similarity). Identified in a complex with USH1C and USH1G (PubMed:21709241). Interacts with MYRIP (PubMed:11964381). Interacts with RPE65 (PubMed:21493626). Interacts with CIB2 (PubMed:23023331). May interact with CALM (PubMed:15300860). Interacts with WHRN (By similarity). Interacts with PLEKHB1 (via PH domain) (By similarity). Interacts with PCDH15 (By similarity). Interacts with TWF2 (By similarity). Interacts with USH1G (By similarity). Interacts with MYH9 (By similarity). Interacts (via MyTH4-FERM domains) with cytoplasmic regions of ADGRV1 and USH2A. Interacts with PDZD7 (via MyTH4-FERM domains) (By similarity). Interacts with CALML4 (PubMed:32209652).</text>
</comment>
<comment type="subcellular location">
    <subcellularLocation>
        <location evidence="2">Cytoplasm</location>
    </subcellularLocation>
    <subcellularLocation>
        <location evidence="2">Cytoplasm</location>
        <location evidence="2">Cell cortex</location>
    </subcellularLocation>
    <subcellularLocation>
        <location evidence="2">Cytoplasm</location>
        <location evidence="2">Cytoskeleton</location>
    </subcellularLocation>
    <subcellularLocation>
        <location evidence="35">Synapse</location>
    </subcellularLocation>
    <text evidence="19 22 29 35">In the photoreceptor cells, mainly localized in the inner and base of outer segments as well as in the synaptic ending region (PubMed:8842737). In retinal pigment epithelial cells colocalizes with a subset of melanosomes, displays predominant localization to stress fiber-like structures and some localization to cytoplasmic puncta (PubMed:19643958, PubMed:27331610). Detected at the tip of cochlear hair cell stereocilia (PubMed:21709241). The complex formed by MYO7A, USH1C and USH1G colocalizes with F-actin (PubMed:21709241).</text>
</comment>
<comment type="alternative products">
    <event type="alternative splicing"/>
    <isoform>
        <id>Q13402-1</id>
        <name>1</name>
        <sequence type="displayed"/>
    </isoform>
    <isoform>
        <id>Q13402-2</id>
        <name>2</name>
        <sequence type="described" ref="VSP_003360 VSP_045848"/>
    </isoform>
    <isoform>
        <id>Q13402-3</id>
        <name>3</name>
        <sequence type="described" ref="VSP_003356 VSP_003357"/>
    </isoform>
    <isoform>
        <id>Q13402-4</id>
        <name>4</name>
        <sequence type="described" ref="VSP_003355 VSP_003356 VSP_003357"/>
    </isoform>
    <isoform>
        <id>Q13402-5</id>
        <name>5</name>
        <sequence type="described" ref="VSP_003353 VSP_003354"/>
    </isoform>
    <isoform>
        <id>Q13402-6</id>
        <name>6</name>
        <sequence type="described" ref="VSP_003358"/>
    </isoform>
    <isoform>
        <id>Q13402-7</id>
        <name>7</name>
        <sequence type="described" ref="VSP_003359"/>
    </isoform>
    <isoform>
        <id>Q13402-8</id>
        <name>8</name>
        <sequence type="described" ref="VSP_053793 VSP_003360"/>
    </isoform>
    <text>Additional isoforms seem to exist.</text>
</comment>
<comment type="tissue specificity">
    <text evidence="19 20 22">Expressed in the pigment epithelium and the photoreceptor cells of the retina. Also found in kidney, liver, testis, cochlea, lymphocytes. Not expressed in brain.</text>
</comment>
<comment type="developmental stage">
    <text evidence="34 35">Detected in optic cup in 5.5 weeks-old embryos. Expressed in retinal pigment epithelium, cochlear and vestibular neuroepithelia, and olfactory epithelium at 8 weeks. At 19 weeks, present in both pigment epithelium and photoreceptor cells. At 24-28 weeks, expression in pigment epithelium and photoreceptor cells increases. Present in pigment epithelium and photoreceptor cells in adult.</text>
</comment>
<comment type="domain">
    <text evidence="48">The SAH (single alpha-helix) region is characterized by a high content of charged residues which are predicted to stabilize the alpha-helical structure by ionic bonds.</text>
</comment>
<comment type="disease" evidence="8 9 10 11 13 17 18 25 26 27 33 37 38 42 43">
    <disease id="DI-01112">
        <name>Usher syndrome 1B</name>
        <acronym>USH1B</acronym>
        <description>USH is a genetically heterogeneous condition characterized by the association of retinitis pigmentosa with sensorineural deafness. Age at onset and differences in auditory and vestibular function distinguish Usher syndrome type 1 (USH1), Usher syndrome type 2 (USH2) and Usher syndrome type 3 (USH3). USH1 is characterized by profound congenital sensorineural deafness, absent vestibular function and prepubertal onset of progressive retinitis pigmentosa leading to blindness.</description>
        <dbReference type="MIM" id="276900"/>
    </disease>
    <text>The disease is caused by variants affecting the gene represented in this entry.</text>
</comment>
<comment type="disease" evidence="30 39 40">
    <disease id="DI-00854">
        <name>Deafness, autosomal recessive, 2</name>
        <acronym>DFNB2</acronym>
        <description>A form of non-syndromic sensorineural hearing loss. Sensorineural deafness results from damage to the neural receptors of the inner ear, the nerve pathways to the brain, or the area of the brain that receives sound information.</description>
        <dbReference type="MIM" id="600060"/>
    </disease>
    <text>The disease is caused by variants affecting the gene represented in this entry.</text>
</comment>
<comment type="disease" evidence="14 15 16 41">
    <disease id="DI-00841">
        <name>Deafness, autosomal dominant, 11</name>
        <acronym>DFNA11</acronym>
        <description>A form of non-syndromic sensorineural hearing loss. Sensorineural deafness results from damage to the neural receptors of the inner ear, the nerve pathways to the brain, or the area of the brain that receives sound information. DFNA11 is characterized by onset after complete speech acquisition and subsequent gradual progression.</description>
        <dbReference type="MIM" id="601317"/>
    </disease>
    <text>The disease is caused by variants affecting the gene represented in this entry.</text>
</comment>
<comment type="similarity">
    <text evidence="47">Belongs to the TRAFAC class myosin-kinesin ATPase superfamily. Myosin family.</text>
</comment>
<comment type="caution">
    <text evidence="47">Represents an unconventional myosin. This protein should not be confused with the conventional myosin-7 (MYH7).</text>
</comment>
<comment type="caution">
    <text evidence="47">Originally predicted to contain a coiled coil domain but proposed to contain a stable SAH domain instead.</text>
</comment>
<comment type="online information" name="Hereditary hearing loss homepage">
    <link uri="https://hereditaryhearingloss.org/dominant"/>
    <text>Gene page</text>
</comment>
<organism>
    <name type="scientific">Homo sapiens</name>
    <name type="common">Human</name>
    <dbReference type="NCBI Taxonomy" id="9606"/>
    <lineage>
        <taxon>Eukaryota</taxon>
        <taxon>Metazoa</taxon>
        <taxon>Chordata</taxon>
        <taxon>Craniata</taxon>
        <taxon>Vertebrata</taxon>
        <taxon>Euteleostomi</taxon>
        <taxon>Mammalia</taxon>
        <taxon>Eutheria</taxon>
        <taxon>Euarchontoglires</taxon>
        <taxon>Primates</taxon>
        <taxon>Haplorrhini</taxon>
        <taxon>Catarrhini</taxon>
        <taxon>Hominidae</taxon>
        <taxon>Homo</taxon>
    </lineage>
</organism>
<gene>
    <name evidence="49" type="primary">MYO7A</name>
    <name type="synonym">USH1B</name>
</gene>
<protein>
    <recommendedName>
        <fullName>Unconventional myosin-VIIa</fullName>
    </recommendedName>
</protein>
<feature type="chain" id="PRO_0000123466" description="Unconventional myosin-VIIa">
    <location>
        <begin position="1"/>
        <end position="2215"/>
    </location>
</feature>
<feature type="domain" description="Myosin motor" evidence="7">
    <location>
        <begin position="65"/>
        <end position="741"/>
    </location>
</feature>
<feature type="domain" description="IQ 1" evidence="4">
    <location>
        <begin position="745"/>
        <end position="765"/>
    </location>
</feature>
<feature type="domain" description="IQ 2" evidence="4">
    <location>
        <begin position="768"/>
        <end position="788"/>
    </location>
</feature>
<feature type="domain" description="IQ 3" evidence="4">
    <location>
        <begin position="791"/>
        <end position="811"/>
    </location>
</feature>
<feature type="domain" description="IQ 4" evidence="4">
    <location>
        <begin position="814"/>
        <end position="834"/>
    </location>
</feature>
<feature type="domain" description="IQ 5" evidence="4">
    <location>
        <begin position="837"/>
        <end position="857"/>
    </location>
</feature>
<feature type="domain" description="MyTH4 1" evidence="6">
    <location>
        <begin position="1017"/>
        <end position="1253"/>
    </location>
</feature>
<feature type="domain" description="FERM 1" evidence="3">
    <location>
        <begin position="1258"/>
        <end position="1602"/>
    </location>
</feature>
<feature type="domain" description="SH3" evidence="5">
    <location>
        <begin position="1603"/>
        <end position="1672"/>
    </location>
</feature>
<feature type="domain" description="MyTH4 2" evidence="6">
    <location>
        <begin position="1747"/>
        <end position="1896"/>
    </location>
</feature>
<feature type="domain" description="FERM 2" evidence="3">
    <location>
        <begin position="1902"/>
        <end position="2205"/>
    </location>
</feature>
<feature type="region of interest" description="Actin-binding" evidence="47">
    <location>
        <begin position="632"/>
        <end position="639"/>
    </location>
</feature>
<feature type="region of interest" description="SAH" evidence="48">
    <location>
        <begin position="858"/>
        <end position="935"/>
    </location>
</feature>
<feature type="binding site" evidence="47">
    <location>
        <begin position="158"/>
        <end position="165"/>
    </location>
    <ligand>
        <name>ATP</name>
        <dbReference type="ChEBI" id="CHEBI:30616"/>
    </ligand>
</feature>
<feature type="modified residue" description="Phosphoserine" evidence="2">
    <location>
        <position position="1569"/>
    </location>
</feature>
<feature type="modified residue" description="Phosphothreonine" evidence="2">
    <location>
        <position position="1571"/>
    </location>
</feature>
<feature type="splice variant" id="VSP_053793" description="In isoform 8." evidence="44">
    <location>
        <begin position="1"/>
        <end position="11"/>
    </location>
</feature>
<feature type="splice variant" id="VSP_003353" description="In isoform 5." evidence="45">
    <location>
        <begin position="284"/>
        <end position="360"/>
    </location>
</feature>
<feature type="splice variant" id="VSP_003354" description="In isoform 5." evidence="45">
    <location>
        <begin position="519"/>
        <end position="564"/>
    </location>
</feature>
<feature type="splice variant" id="VSP_003355" description="In isoform 4." evidence="46">
    <original>E</original>
    <variation>EVLQ</variation>
    <location>
        <position position="1095"/>
    </location>
</feature>
<feature type="splice variant" id="VSP_003358" description="In isoform 6." evidence="45">
    <location>
        <begin position="1096"/>
        <end position="1125"/>
    </location>
</feature>
<feature type="splice variant" id="VSP_003356" description="In isoform 3 and isoform 4." evidence="46">
    <original>DEIYCQISKQLTHNPSKSSYARGWILVSLCVG</original>
    <variation>SVPESLLVAEWCLCQPSKRLSQAWPGFGFAAS</variation>
    <location>
        <begin position="1169"/>
        <end position="1200"/>
    </location>
</feature>
<feature type="splice variant" id="VSP_003357" description="In isoform 3 and isoform 4." evidence="46">
    <location>
        <begin position="1201"/>
        <end position="2215"/>
    </location>
</feature>
<feature type="splice variant" id="VSP_003359" description="In isoform 7." evidence="45">
    <location>
        <begin position="1433"/>
        <end position="1470"/>
    </location>
</feature>
<feature type="splice variant" id="VSP_003360" description="In isoform 2 and isoform 8." evidence="44 46">
    <location>
        <begin position="1524"/>
        <end position="1561"/>
    </location>
</feature>
<feature type="splice variant" id="VSP_045848" description="In isoform 2." evidence="46">
    <location>
        <begin position="2117"/>
        <end position="2118"/>
    </location>
</feature>
<feature type="sequence variant" id="VAR_009315" description="In dbSNP:rs1052030." evidence="17">
    <original>L</original>
    <variation>S</variation>
    <location>
        <position position="16"/>
    </location>
</feature>
<feature type="sequence variant" id="VAR_009316" description="In USH1B; dbSNP:rs782252317." evidence="17 38">
    <original>G</original>
    <variation>R</variation>
    <location>
        <position position="25"/>
    </location>
</feature>
<feature type="sequence variant" id="VAR_024039" description="In USH1B; dbSNP:rs369125667." evidence="11">
    <original>A</original>
    <variation>E</variation>
    <location>
        <position position="26"/>
    </location>
</feature>
<feature type="sequence variant" id="VAR_024040" description="In USH1B; dbSNP:rs1555054747." evidence="11">
    <original>V</original>
    <variation>M</variation>
    <location>
        <position position="67"/>
    </location>
</feature>
<feature type="sequence variant" id="VAR_024041" description="In USH1B; dbSNP:rs1165878942." evidence="11">
    <original>R</original>
    <variation>P</variation>
    <location>
        <position position="90"/>
    </location>
</feature>
<feature type="sequence variant" id="VAR_027301" description="In USH1B; uncertain significance; dbSNP:rs111033403." evidence="18">
    <original>H</original>
    <variation>D</variation>
    <location>
        <position position="133"/>
    </location>
</feature>
<feature type="sequence variant" id="VAR_024042" description="In USH1B; dbSNP:rs111033181." evidence="11">
    <original>I</original>
    <variation>N</variation>
    <location>
        <position position="134"/>
    </location>
</feature>
<feature type="sequence variant" id="VAR_077020" description="Found in patients with retinitis pigmentosa; uncertain significance; dbSNP:rs1555062409." evidence="28">
    <original>G</original>
    <variation>R</variation>
    <location>
        <position position="158"/>
    </location>
</feature>
<feature type="sequence variant" id="VAR_027302" description="In USH1B; dbSNP:rs1472566324." evidence="18">
    <original>G</original>
    <variation>R</variation>
    <location>
        <position position="163"/>
    </location>
</feature>
<feature type="sequence variant" id="VAR_027303" description="In USH1B." evidence="18">
    <original>K</original>
    <variation>R</variation>
    <location>
        <position position="164"/>
    </location>
</feature>
<feature type="sequence variant" id="VAR_024043" description="In USH1B; dbSNP:rs111033174." evidence="17 18 26">
    <original>T</original>
    <variation>M</variation>
    <location>
        <position position="165"/>
    </location>
</feature>
<feature type="sequence variant" id="VAR_066861" description="Found in a patient with Leber congenital amaurosis; uncertain significance; dbSNP:rs1188616455." evidence="23">
    <original>T</original>
    <variation>I</variation>
    <location>
        <position position="193"/>
    </location>
</feature>
<feature type="sequence variant" id="VAR_027304" description="In USH1B; is predicted to alter the normal splicing of exon 6." evidence="18">
    <original>A</original>
    <variation>T</variation>
    <location>
        <position position="198"/>
    </location>
</feature>
<feature type="sequence variant" id="VAR_027305" description="In USH1B." evidence="18">
    <original>T</original>
    <variation>A</variation>
    <location>
        <position position="204"/>
    </location>
</feature>
<feature type="sequence variant" id="VAR_009317" description="In dbSNP:rs781946292.">
    <original>I</original>
    <variation>V</variation>
    <location>
        <position position="205"/>
    </location>
</feature>
<feature type="sequence variant" id="VAR_009318" description="In USH1B; dbSNP:rs121965080." evidence="37">
    <original>R</original>
    <variation>C</variation>
    <location>
        <position position="212"/>
    </location>
</feature>
<feature type="sequence variant" id="VAR_009319" description="In USH1B; dbSNP:rs28934610." evidence="37">
    <original>R</original>
    <variation>H</variation>
    <location>
        <position position="212"/>
    </location>
</feature>
<feature type="sequence variant" id="VAR_009320" description="In USH1B; dbSNP:rs111033283." evidence="42">
    <original>G</original>
    <variation>R</variation>
    <location>
        <position position="214"/>
    </location>
</feature>
<feature type="sequence variant" id="VAR_009321" description="In USH1B.">
    <location>
        <begin position="218"/>
        <end position="219"/>
    </location>
</feature>
<feature type="sequence variant" id="VAR_024044" description="In USH1B; dbSNP:rs782166819." evidence="11">
    <original>R</original>
    <variation>C</variation>
    <location>
        <position position="241"/>
    </location>
</feature>
<feature type="sequence variant" id="VAR_009322" description="In USH1B." evidence="8">
    <original>R</original>
    <variation>S</variation>
    <location>
        <position position="241"/>
    </location>
</feature>
<feature type="sequence variant" id="VAR_009323" description="In DFNB2; dbSNP:rs121965081." evidence="39">
    <original>R</original>
    <variation>P</variation>
    <location>
        <position position="244"/>
    </location>
</feature>
<feature type="sequence variant" id="VAR_024045" description="In USH1B; dbSNP:rs781896482." evidence="11">
    <location>
        <position position="269"/>
    </location>
</feature>
<feature type="sequence variant" id="VAR_009324" description="In dbSNP:rs41298135." evidence="37">
    <original>R</original>
    <variation>H</variation>
    <location>
        <position position="302"/>
    </location>
</feature>
<feature type="sequence variant" id="VAR_009325" description="In USH1B; dbSNP:rs1555067667." evidence="13 42">
    <original>A</original>
    <variation>D</variation>
    <location>
        <position position="397"/>
    </location>
</feature>
<feature type="sequence variant" id="VAR_009326" description="In USH1B; dbSNP:rs1269622956." evidence="37">
    <original>E</original>
    <variation>Q</variation>
    <location>
        <position position="450"/>
    </location>
</feature>
<feature type="sequence variant" id="VAR_024046" description="In USH1B; dbSNP:rs111033286." evidence="11">
    <original>A</original>
    <variation>V</variation>
    <location>
        <position position="457"/>
    </location>
</feature>
<feature type="sequence variant" id="VAR_027306" description="In DFNA11; dbSNP:rs121965084." evidence="15">
    <original>N</original>
    <variation>I</variation>
    <location>
        <position position="458"/>
    </location>
</feature>
<feature type="sequence variant" id="VAR_009327" description="In USH1B." evidence="37">
    <original>H</original>
    <variation>HQ</variation>
    <location>
        <position position="468"/>
    </location>
</feature>
<feature type="sequence variant" id="VAR_009328" description="In USH1B." evidence="37">
    <original>P</original>
    <variation>L</variation>
    <location>
        <position position="503"/>
    </location>
</feature>
<feature type="sequence variant" id="VAR_024047" description="In USH1B; dbSNP:rs111033206." evidence="11 18">
    <original>G</original>
    <variation>D</variation>
    <location>
        <position position="519"/>
    </location>
</feature>
<feature type="sequence variant" id="VAR_009329">
    <original>V</original>
    <variation>I</variation>
    <location>
        <position position="597"/>
    </location>
</feature>
<feature type="sequence variant" id="VAR_009330" description="In DFNB2; dbSNP:rs121965082." evidence="40">
    <original>M</original>
    <variation>I</variation>
    <location>
        <position position="599"/>
    </location>
</feature>
<feature type="sequence variant" id="VAR_056187" description="In dbSNP:rs2276282.">
    <original>E</original>
    <variation>K</variation>
    <location>
        <position position="602"/>
    </location>
</feature>
<feature type="sequence variant" id="VAR_009331" description="In USH1B; atypical; dbSNP:rs876657416." evidence="43">
    <original>L</original>
    <variation>P</variation>
    <location>
        <position position="651"/>
    </location>
</feature>
<feature type="sequence variant" id="VAR_079504" description="In DFNB2." evidence="30">
    <original>C</original>
    <variation>R</variation>
    <location>
        <position position="652"/>
    </location>
</feature>
<feature type="sequence variant" id="VAR_056188" description="In dbSNP:rs35641839.">
    <original>V</original>
    <variation>I</variation>
    <location>
        <position position="679"/>
    </location>
</feature>
<feature type="sequence variant" id="VAR_027307" description="In DFNA11; dbSNP:rs1954557651." evidence="14">
    <original>G</original>
    <variation>R</variation>
    <location>
        <position position="722"/>
    </location>
</feature>
<feature type="sequence variant" id="VAR_024048" description="In USH1B; dbSNP:rs782174733." evidence="17">
    <original>R</original>
    <variation>W</variation>
    <location>
        <position position="756"/>
    </location>
</feature>
<feature type="sequence variant" id="VAR_009332" description="In USH1B; uncertain significance; dbSNP:rs368341987." evidence="42">
    <original>A</original>
    <variation>T</variation>
    <location>
        <position position="826"/>
    </location>
</feature>
<feature type="sequence variant" id="VAR_027308" description="In DFNA11; disturb calmodulin/MYO7A binding; dbSNP:rs2135473615." evidence="16">
    <original>R</original>
    <variation>C</variation>
    <location>
        <position position="853"/>
    </location>
</feature>
<feature type="sequence variant" id="VAR_009333" description="In DFNA11." evidence="41">
    <location>
        <begin position="886"/>
        <end position="888"/>
    </location>
</feature>
<feature type="sequence variant" id="VAR_071646" description="In USH1B; dbSNP:rs1296612982." evidence="26">
    <original>M</original>
    <variation>R</variation>
    <location>
        <position position="946"/>
    </location>
</feature>
<feature type="sequence variant" id="VAR_009334" description="In USH1B; dbSNP:rs781988557." evidence="38">
    <original>G</original>
    <variation>S</variation>
    <location>
        <position position="955"/>
    </location>
</feature>
<feature type="sequence variant" id="VAR_024049" description="In USH1B; dbSNP:rs111033233." evidence="11 17">
    <original>E</original>
    <variation>D</variation>
    <location>
        <position position="968"/>
    </location>
</feature>
<feature type="sequence variant" id="VAR_009335" description="In USH1B; dbSNP:rs375050157." evidence="9">
    <original>L</original>
    <variation>P</variation>
    <location>
        <position position="1087"/>
    </location>
</feature>
<feature type="sequence variant" id="VAR_009336" description="In USH1B; dbSNP:rs111033214." evidence="10 13 18">
    <original>E</original>
    <variation>K</variation>
    <location>
        <position position="1170"/>
    </location>
</feature>
<feature type="sequence variant" id="VAR_009337" description="In USH1B; dbSNP:rs111033178." evidence="11 18">
    <original>R</original>
    <variation>Q</variation>
    <location>
        <position position="1240"/>
    </location>
</feature>
<feature type="sequence variant" id="VAR_071647" description="In USH1B." evidence="25">
    <original>E</original>
    <variation>K</variation>
    <location>
        <position position="1248"/>
    </location>
</feature>
<feature type="sequence variant" id="VAR_009338" description="In USH1B; dbSNP:rs749747871." evidence="11">
    <original>A</original>
    <variation>P</variation>
    <location>
        <position position="1288"/>
    </location>
</feature>
<feature type="sequence variant" id="VAR_027309" description="In USH1B; dbSNP:rs373169422." evidence="13">
    <original>E</original>
    <variation>K</variation>
    <location>
        <position position="1327"/>
    </location>
</feature>
<feature type="sequence variant" id="VAR_009339" description="In USH1B; dbSNP:rs763469001." evidence="8">
    <original>R</original>
    <variation>S</variation>
    <location>
        <position position="1343"/>
    </location>
</feature>
<feature type="sequence variant" id="VAR_024050" description="In USH1B; dbSNP:rs1437625274." evidence="11">
    <location>
        <position position="1346"/>
    </location>
</feature>
<feature type="sequence variant" id="VAR_027310" description="In USH1B." evidence="13">
    <location>
        <begin position="1347"/>
        <end position="1351"/>
    </location>
</feature>
<feature type="sequence variant" id="VAR_027311" description="In dbSNP:rs41298747." evidence="13 18">
    <original>T</original>
    <variation>M</variation>
    <location>
        <position position="1566"/>
    </location>
</feature>
<feature type="sequence variant" id="VAR_009340" description="In USH1B; atypical; dbSNP:rs139889944." evidence="31 43">
    <original>R</original>
    <variation>Q</variation>
    <location>
        <position position="1602"/>
    </location>
</feature>
<feature type="sequence variant" id="VAR_009341" description="In USH1B." evidence="8">
    <original>A</original>
    <variation>S</variation>
    <location>
        <position position="1628"/>
    </location>
</feature>
<feature type="sequence variant" id="VAR_009343" description="In dbSNP:rs2276288." evidence="34 36">
    <original>S</original>
    <variation>C</variation>
    <location>
        <position position="1666"/>
    </location>
</feature>
<feature type="sequence variant" id="VAR_027312">
    <original>S</original>
    <variation>G</variation>
    <location>
        <position position="1666"/>
    </location>
</feature>
<feature type="sequence variant" id="VAR_009344" description="In dbSNP:rs77625410." evidence="10 13 18">
    <original>Y</original>
    <variation>C</variation>
    <location>
        <position position="1719"/>
    </location>
</feature>
<feature type="sequence variant" id="VAR_027313" description="In dbSNP:rs12275336.">
    <original>G</original>
    <variation>S</variation>
    <location>
        <position position="1740"/>
    </location>
</feature>
<feature type="sequence variant" id="VAR_024051" description="In USH1B; dbSNP:rs111033287." evidence="11">
    <original>R</original>
    <variation>W</variation>
    <location>
        <position position="1743"/>
    </location>
</feature>
<feature type="sequence variant" id="VAR_074074" description="In USH1B; dbSNP:rs377267777." evidence="27">
    <original>E</original>
    <variation>K</variation>
    <location>
        <position position="1812"/>
    </location>
</feature>
<feature type="sequence variant" id="VAR_024052" description="In USH1B; dbSNP:rs368657015." evidence="11 18">
    <original>L</original>
    <variation>P</variation>
    <location>
        <position position="1858"/>
    </location>
</feature>
<feature type="sequence variant" id="VAR_027314" description="In USH1B; dbSNP:rs397516321." evidence="18">
    <original>R</original>
    <variation>W</variation>
    <location>
        <position position="1873"/>
    </location>
</feature>
<feature type="sequence variant" id="VAR_024053" description="In USH1B; dbSNP:rs111033215." evidence="17">
    <original>R</original>
    <variation>Q</variation>
    <location>
        <position position="1883"/>
    </location>
</feature>
<feature type="sequence variant" id="VAR_024054" description="In USH1B; dbSNP:rs199606180." evidence="11">
    <original>P</original>
    <variation>L</variation>
    <location>
        <position position="1887"/>
    </location>
</feature>
<feature type="sequence variant" id="VAR_009345" description="In dbSNP:rs948962." evidence="34 36">
    <original>L</original>
    <variation>I</variation>
    <location>
        <position position="1954"/>
    </location>
</feature>
<feature type="sequence variant" id="VAR_027315" description="In USH1B." evidence="18">
    <location>
        <position position="1962"/>
    </location>
</feature>
<feature type="sequence variant" id="VAR_009346" description="In dbSNP:rs771906493.">
    <original>F</original>
    <variation>I</variation>
    <location>
        <position position="1992"/>
    </location>
</feature>
<feature type="sequence variant" id="VAR_009347" description="In USH1B; dbSNP:rs1191025888." evidence="38">
    <original>G</original>
    <variation>E</variation>
    <location>
        <position position="2137"/>
    </location>
</feature>
<feature type="sequence variant" id="VAR_027316" description="In dbSNP:rs1132036.">
    <original>D</original>
    <variation>N</variation>
    <location>
        <position position="2142"/>
    </location>
</feature>
<feature type="sequence variant" id="VAR_009348" description="In USH1B; dbSNP:rs747656448." evidence="8">
    <original>G</original>
    <variation>S</variation>
    <location>
        <position position="2163"/>
    </location>
</feature>
<feature type="sequence variant" id="VAR_024055" description="In USH1B; dbSNP:rs397516332." evidence="11">
    <original>G</original>
    <variation>D</variation>
    <location>
        <position position="2187"/>
    </location>
</feature>
<feature type="sequence conflict" description="In Ref. 4; AAA20909." evidence="47" ref="4">
    <original>L</original>
    <variation>P</variation>
    <location>
        <position position="172"/>
    </location>
</feature>
<feature type="sequence conflict" description="In Ref. 2; AAC50927/AAC50722." evidence="47" ref="2">
    <original>F</original>
    <variation>L</variation>
    <location>
        <position position="470"/>
    </location>
</feature>
<feature type="sequence conflict" description="In Ref. 9; AAC51150." evidence="47" ref="9">
    <original>D</original>
    <variation>N</variation>
    <location>
        <position position="576"/>
    </location>
</feature>
<feature type="sequence conflict" description="In Ref. 2; AAC50927/AAC50722 and 6; AAC50218." evidence="47" ref="2 6">
    <original>F</original>
    <variation>S</variation>
    <location>
        <position position="794"/>
    </location>
</feature>
<feature type="sequence conflict" description="In Ref. 2; AAC50927/AAC50722 and 6; AAC50218." evidence="47" ref="2 6">
    <original>R</original>
    <variation>Q</variation>
    <location>
        <position position="873"/>
    </location>
</feature>
<feature type="sequence conflict" description="In Ref. 6; AAC50218." evidence="47" ref="6">
    <original>KIY</original>
    <variation>RNS</variation>
    <location>
        <begin position="1073"/>
        <end position="1075"/>
    </location>
</feature>
<feature type="sequence conflict" description="In Ref. 2; AAC50927." evidence="47" ref="2">
    <original>N</original>
    <variation>S</variation>
    <location>
        <position position="1237"/>
    </location>
</feature>
<feature type="helix" evidence="50">
    <location>
        <begin position="1715"/>
        <end position="1721"/>
    </location>
</feature>
<feature type="turn" evidence="50">
    <location>
        <begin position="1727"/>
        <end position="1731"/>
    </location>
</feature>
<feature type="helix" evidence="50">
    <location>
        <begin position="1758"/>
        <end position="1760"/>
    </location>
</feature>
<feature type="helix" evidence="50">
    <location>
        <begin position="1764"/>
        <end position="1780"/>
    </location>
</feature>
<feature type="helix" evidence="50">
    <location>
        <begin position="1794"/>
        <end position="1805"/>
    </location>
</feature>
<feature type="helix" evidence="50">
    <location>
        <begin position="1808"/>
        <end position="1821"/>
    </location>
</feature>
<feature type="helix" evidence="50">
    <location>
        <begin position="1827"/>
        <end position="1841"/>
    </location>
</feature>
<feature type="turn" evidence="50">
    <location>
        <begin position="1848"/>
        <end position="1850"/>
    </location>
</feature>
<feature type="helix" evidence="50">
    <location>
        <begin position="1851"/>
        <end position="1859"/>
    </location>
</feature>
<feature type="turn" evidence="50">
    <location>
        <begin position="1860"/>
        <end position="1863"/>
    </location>
</feature>
<feature type="helix" evidence="50">
    <location>
        <begin position="1867"/>
        <end position="1880"/>
    </location>
</feature>
<feature type="helix" evidence="50">
    <location>
        <begin position="1889"/>
        <end position="1896"/>
    </location>
</feature>
<feature type="strand" evidence="50">
    <location>
        <begin position="1902"/>
        <end position="1908"/>
    </location>
</feature>
<feature type="turn" evidence="50">
    <location>
        <begin position="1909"/>
        <end position="1911"/>
    </location>
</feature>
<feature type="strand" evidence="50">
    <location>
        <begin position="1912"/>
        <end position="1918"/>
    </location>
</feature>
<feature type="helix" evidence="50">
    <location>
        <begin position="1924"/>
        <end position="1934"/>
    </location>
</feature>
<feature type="strand" evidence="50">
    <location>
        <begin position="1943"/>
        <end position="1951"/>
    </location>
</feature>
<feature type="strand" evidence="50">
    <location>
        <begin position="1953"/>
        <end position="1955"/>
    </location>
</feature>
<feature type="helix" evidence="50">
    <location>
        <begin position="1962"/>
        <end position="1975"/>
    </location>
</feature>
<feature type="strand" evidence="50">
    <location>
        <begin position="1989"/>
        <end position="1995"/>
    </location>
</feature>
<feature type="helix" evidence="50">
    <location>
        <begin position="2007"/>
        <end position="2012"/>
    </location>
</feature>
<feature type="helix" evidence="50">
    <location>
        <begin position="2014"/>
        <end position="2024"/>
    </location>
</feature>
<feature type="helix" evidence="50">
    <location>
        <begin position="2031"/>
        <end position="2046"/>
    </location>
</feature>
<feature type="helix" evidence="50">
    <location>
        <begin position="2053"/>
        <end position="2055"/>
    </location>
</feature>
<feature type="helix" evidence="50">
    <location>
        <begin position="2057"/>
        <end position="2059"/>
    </location>
</feature>
<feature type="helix" evidence="50">
    <location>
        <begin position="2060"/>
        <end position="2063"/>
    </location>
</feature>
<feature type="turn" evidence="50">
    <location>
        <begin position="2066"/>
        <end position="2068"/>
    </location>
</feature>
<feature type="helix" evidence="50">
    <location>
        <begin position="2069"/>
        <end position="2071"/>
    </location>
</feature>
<feature type="helix" evidence="50">
    <location>
        <begin position="2074"/>
        <end position="2085"/>
    </location>
</feature>
<feature type="helix" evidence="50">
    <location>
        <begin position="2086"/>
        <end position="2088"/>
    </location>
</feature>
<feature type="helix" evidence="50">
    <location>
        <begin position="2093"/>
        <end position="2104"/>
    </location>
</feature>
<feature type="turn" evidence="50">
    <location>
        <begin position="2108"/>
        <end position="2111"/>
    </location>
</feature>
<feature type="strand" evidence="50">
    <location>
        <begin position="2113"/>
        <end position="2121"/>
    </location>
</feature>
<feature type="strand" evidence="50">
    <location>
        <begin position="2123"/>
        <end position="2125"/>
    </location>
</feature>
<feature type="strand" evidence="50">
    <location>
        <begin position="2127"/>
        <end position="2134"/>
    </location>
</feature>
<feature type="strand" evidence="50">
    <location>
        <begin position="2137"/>
        <end position="2141"/>
    </location>
</feature>
<feature type="turn" evidence="50">
    <location>
        <begin position="2143"/>
        <end position="2145"/>
    </location>
</feature>
<feature type="strand" evidence="50">
    <location>
        <begin position="2148"/>
        <end position="2152"/>
    </location>
</feature>
<feature type="helix" evidence="50">
    <location>
        <begin position="2154"/>
        <end position="2156"/>
    </location>
</feature>
<feature type="strand" evidence="50">
    <location>
        <begin position="2157"/>
        <end position="2162"/>
    </location>
</feature>
<feature type="strand" evidence="50">
    <location>
        <begin position="2164"/>
        <end position="2171"/>
    </location>
</feature>
<feature type="strand" evidence="50">
    <location>
        <begin position="2179"/>
        <end position="2183"/>
    </location>
</feature>
<feature type="helix" evidence="50">
    <location>
        <begin position="2187"/>
        <end position="2204"/>
    </location>
</feature>
<evidence type="ECO:0000250" key="1"/>
<evidence type="ECO:0000250" key="2">
    <source>
        <dbReference type="UniProtKB" id="P97479"/>
    </source>
</evidence>
<evidence type="ECO:0000255" key="3">
    <source>
        <dbReference type="PROSITE-ProRule" id="PRU00084"/>
    </source>
</evidence>
<evidence type="ECO:0000255" key="4">
    <source>
        <dbReference type="PROSITE-ProRule" id="PRU00116"/>
    </source>
</evidence>
<evidence type="ECO:0000255" key="5">
    <source>
        <dbReference type="PROSITE-ProRule" id="PRU00192"/>
    </source>
</evidence>
<evidence type="ECO:0000255" key="6">
    <source>
        <dbReference type="PROSITE-ProRule" id="PRU00359"/>
    </source>
</evidence>
<evidence type="ECO:0000255" key="7">
    <source>
        <dbReference type="PROSITE-ProRule" id="PRU00782"/>
    </source>
</evidence>
<evidence type="ECO:0000269" key="8">
    <source>
    </source>
</evidence>
<evidence type="ECO:0000269" key="9">
    <source>
    </source>
</evidence>
<evidence type="ECO:0000269" key="10">
    <source>
    </source>
</evidence>
<evidence type="ECO:0000269" key="11">
    <source>
    </source>
</evidence>
<evidence type="ECO:0000269" key="12">
    <source>
    </source>
</evidence>
<evidence type="ECO:0000269" key="13">
    <source>
    </source>
</evidence>
<evidence type="ECO:0000269" key="14">
    <source>
    </source>
</evidence>
<evidence type="ECO:0000269" key="15">
    <source>
    </source>
</evidence>
<evidence type="ECO:0000269" key="16">
    <source>
    </source>
</evidence>
<evidence type="ECO:0000269" key="17">
    <source>
    </source>
</evidence>
<evidence type="ECO:0000269" key="18">
    <source>
    </source>
</evidence>
<evidence type="ECO:0000269" key="19">
    <source>
    </source>
</evidence>
<evidence type="ECO:0000269" key="20">
    <source>
    </source>
</evidence>
<evidence type="ECO:0000269" key="21">
    <source>
    </source>
</evidence>
<evidence type="ECO:0000269" key="22">
    <source>
    </source>
</evidence>
<evidence type="ECO:0000269" key="23">
    <source>
    </source>
</evidence>
<evidence type="ECO:0000269" key="24">
    <source>
    </source>
</evidence>
<evidence type="ECO:0000269" key="25">
    <source>
    </source>
</evidence>
<evidence type="ECO:0000269" key="26">
    <source>
    </source>
</evidence>
<evidence type="ECO:0000269" key="27">
    <source>
    </source>
</evidence>
<evidence type="ECO:0000269" key="28">
    <source>
    </source>
</evidence>
<evidence type="ECO:0000269" key="29">
    <source>
    </source>
</evidence>
<evidence type="ECO:0000269" key="30">
    <source>
    </source>
</evidence>
<evidence type="ECO:0000269" key="31">
    <source>
    </source>
</evidence>
<evidence type="ECO:0000269" key="32">
    <source>
    </source>
</evidence>
<evidence type="ECO:0000269" key="33">
    <source>
    </source>
</evidence>
<evidence type="ECO:0000269" key="34">
    <source>
    </source>
</evidence>
<evidence type="ECO:0000269" key="35">
    <source>
    </source>
</evidence>
<evidence type="ECO:0000269" key="36">
    <source>
    </source>
</evidence>
<evidence type="ECO:0000269" key="37">
    <source>
    </source>
</evidence>
<evidence type="ECO:0000269" key="38">
    <source>
    </source>
</evidence>
<evidence type="ECO:0000269" key="39">
    <source>
    </source>
</evidence>
<evidence type="ECO:0000269" key="40">
    <source>
    </source>
</evidence>
<evidence type="ECO:0000269" key="41">
    <source>
    </source>
</evidence>
<evidence type="ECO:0000269" key="42">
    <source>
    </source>
</evidence>
<evidence type="ECO:0000269" key="43">
    <source>
    </source>
</evidence>
<evidence type="ECO:0000303" key="44">
    <source>
    </source>
</evidence>
<evidence type="ECO:0000303" key="45">
    <source>
    </source>
</evidence>
<evidence type="ECO:0000303" key="46">
    <source>
    </source>
</evidence>
<evidence type="ECO:0000305" key="47"/>
<evidence type="ECO:0000305" key="48">
    <source>
    </source>
</evidence>
<evidence type="ECO:0000312" key="49">
    <source>
        <dbReference type="HGNC" id="HGNC:7606"/>
    </source>
</evidence>
<evidence type="ECO:0007829" key="50">
    <source>
        <dbReference type="PDB" id="5MV9"/>
    </source>
</evidence>
<sequence>MVILQQGDHVWMDLRLGQEFDVPIGAVVKLCDSGQVQVVDDEDNEHWISPQNATHIKPMHPTSVHGVEDMIRLGDLNEAGILRNLLIRYRDHLIYTYTGSILVAVNPYQLLSIYSPEHIRQYTNKKIGEMPPHIFAIADNCYFNMKRNSRDQCCIISGESGAGKTESTKLILQFLAAISGQHSWIEQQVLEATPILEAFGNAKTIRNDNSSRFGKYIDIHFNKRGAIEGAKIEQYLLEKSRVCRQALDERNYHVFYCMLEGMSEDQKKKLGLGQASDYNYLAMGNCITCEGRVDSQEYANIRSAMKVLMFTDTENWEISKLLAAILHLGNLQYEARTFENLDACEVLFSPSLATAASLLEVNPPDLMSCLTSRTLITRGETVSTPLSREQALDVRDAFVKGIYGRLFVWIVDKINAAIYKPPSQDVKNSRRSIGLLDIFGFENFAVNSFEQLCINFANEHLQQFFVRHVFKLEQEEYDLESIDWLHIEFTDNQDALDMIANKPMNIISLIDEESKFPKGTDTTMLHKLNSQHKLNANYIPPKNNHETQFGINHFAGIVYYETQGFLEKNRDTLHGDIIQLVHSSRNKFIKQIFQADVAMGAETRKRSPTLSSQFKRSLELLMRTLGACQPFFVRCIKPNEFKKPMLFDRHLCVRQLRYSGMMETIRIRRAGYPIRYSFVEFVERYRVLLPGVKPAYKQGDLRGTCQRMAEAVLGTHDDWQIGKTKIFLKDHHDMLLEVERDKAITDRVILLQKVIRGFKDRSNFLKLKNAATLIQRHWRGHNCRKNYGLMRLGFLRLQALHRSRKLHQQYRLARQRIIQFQARCRAYLVRKAFRHRLWAVLTVQAYARGMIARRLHQRLRAEYLWRLEAEKMRLAEEEKLRKEMSAKKAKEEAERKHQERLAQLAREDAERELKEKEAARRKKELLEQMERARHEPVNHSDMVDKMFGFLGTSGGLPGQEGQAPSGFEDLERGRREMVEEDLDAALPLPDEDEEDLSEYKFAKFAATYFQGTTTHSYTRRPLKQPLLYHDDEGDQLAALAVWITILRFMGDLPEPKYHTAMSDGSEKIPVMTKIYETLGKKTYKRELQALQGEGEAQLPEGQKKSSVRHKLVHLTLKKKSKLTEEVTKRLHDGESTVQGNSMLEDRPTSNLEKLHFIIGNGILRPALRDEIYCQISKQLTHNPSKSSYARGWILVSLCVGCFAPSEKFVKYLRNFIHGGPPGYAPYCEERLRRTFVNGTRTQPPSWLELQATKSKKPIMLPVTFMDGTTKTLLTDSATTAKELCNALADKISLKDRFGFSLYIALFDKVSSLGSGSDHVMDAISQCEQYAKEQGAQERNAPWRLFFRKEVFTPWHSPSEDNVATNLIYQQVVRGVKFGEYRCEKEDDLAELASQQYFVDYGSEMILERLLNLVPTYIPDREITPLKTLEKWAQLAIAAHKKGIYAQRRTDAQKVKEDVVSYARFKWPLLFSRFYEAYKFSGPSLPKNDVIVAVNWTGVYFVDEQEQVLLELSFPEIMAVSSSRECRVWLSLGCSDLGCAAPHSGWAGLTPAGPCSPCWSCRGAKTTAPSFTLATIKGDEYTFTSSNAEDIRDLVVTFLEGLRKRSKYVVALQDNPNPAGEESGFLSFAKGDLIILDHDTGEQVMNSGWANGINERTKQRGDFPTDSVYVMPTVTMPPREIVALVTMTPDQRQDVVRLLQLRTAEPEVRAKPYTLEEFSYDYFRPPPKHTLSRVMVSKARGKDRLWSHTREPLKQALLKKLLGSEELSQEACLAFIAVLKYMGDYPSKRTRSVNELTDQIFEGPLKAEPLKDEAYVQILKQLTDNHIRYSEERGWELLWLCTGLFPPSNILLPHVQRFLQSRKHCPLAIDCLQRLQKALRNGSRKYPPHLVEVEAIQHKTTQIFHKVYFPDDTDEAFEVESSTKAKDFCQNIATRLLLKSSEGFSLFVKIADKVLSVPENDFFFDFVRHLTDWIKKARPIKDGIVPSLTYQVFFMKKLWTTTVPGKDPMADSIFHYYQELPKYLRGYHKCTREEVLQLGALIYRVKFEEDKSYFPSIPKLLRELVPQDLIRQVSPDDWKRSIVAYFNKHAGKSKEEAKLAFLKLIFKWPTFGSAFFEVKQTTEPNFPEILLIAINKYGVSLIDPKTKDILTTHPFTKISNWSSGNTYFHITIGNLVRGSKLLCETSLGYKMDDLLTSYISQMLTAMSKQRGSRSGK</sequence>
<keyword id="KW-0002">3D-structure</keyword>
<keyword id="KW-0009">Actin-binding</keyword>
<keyword id="KW-0025">Alternative splicing</keyword>
<keyword id="KW-0067">ATP-binding</keyword>
<keyword id="KW-0112">Calmodulin-binding</keyword>
<keyword id="KW-0963">Cytoplasm</keyword>
<keyword id="KW-0206">Cytoskeleton</keyword>
<keyword id="KW-0209">Deafness</keyword>
<keyword id="KW-0225">Disease variant</keyword>
<keyword id="KW-1009">Hearing</keyword>
<keyword id="KW-0901">Leber congenital amaurosis</keyword>
<keyword id="KW-0505">Motor protein</keyword>
<keyword id="KW-0518">Myosin</keyword>
<keyword id="KW-1010">Non-syndromic deafness</keyword>
<keyword id="KW-0547">Nucleotide-binding</keyword>
<keyword id="KW-0597">Phosphoprotein</keyword>
<keyword id="KW-1267">Proteomics identification</keyword>
<keyword id="KW-1185">Reference proteome</keyword>
<keyword id="KW-0677">Repeat</keyword>
<keyword id="KW-0682">Retinitis pigmentosa</keyword>
<keyword id="KW-0728">SH3 domain</keyword>
<keyword id="KW-0770">Synapse</keyword>
<keyword id="KW-0836">Usher syndrome</keyword>
<reference key="1">
    <citation type="journal article" date="1996" name="Proc. Natl. Acad. Sci. U.S.A.">
        <title>Human myosin VIIA responsible for the Usher 1B syndrome: a predicted membrane-associated motor protein expressed in developing sensory epithelia.</title>
        <authorList>
            <person name="Weil D."/>
            <person name="Levy G."/>
            <person name="Sahly I."/>
            <person name="Levi-Acobas F."/>
            <person name="Blanchard S."/>
            <person name="El-Amraoui A."/>
            <person name="Crozet F."/>
            <person name="Philippe H."/>
            <person name="Abitbol M."/>
            <person name="Petit C."/>
        </authorList>
    </citation>
    <scope>NUCLEOTIDE SEQUENCE [MRNA] (ISOFORMS 1; 5; 6 AND 7)</scope>
    <scope>DEVELOPMENTAL STAGE</scope>
    <scope>VARIANTS CYS-1666 AND ILE-1954</scope>
    <source>
        <tissue>Retina</tissue>
    </source>
</reference>
<reference key="2">
    <citation type="journal article" date="1996" name="Genomics">
        <title>Molecular cloning and domain structure of human myosin-VIIa, the gene product defective in usher syndrome 1B.</title>
        <authorList>
            <person name="Chen Z.-Y."/>
            <person name="Hasson T."/>
            <person name="Kelley P.M."/>
            <person name="Schwender B.J."/>
            <person name="Schwartz M.F."/>
            <person name="Ramakrishnan M."/>
            <person name="Kimberling W.J."/>
            <person name="Mooseker M.S."/>
            <person name="Corey D.P."/>
        </authorList>
    </citation>
    <scope>NUCLEOTIDE SEQUENCE [MRNA] (ISOFORMS 2; 3 AND 4)</scope>
    <scope>VARIANTS CYS-1666 AND ILE-1954</scope>
    <source>
        <tissue>Testis</tissue>
    </source>
</reference>
<reference key="3">
    <citation type="journal article" date="2006" name="Nature">
        <title>Human chromosome 11 DNA sequence and analysis including novel gene identification.</title>
        <authorList>
            <person name="Taylor T.D."/>
            <person name="Noguchi H."/>
            <person name="Totoki Y."/>
            <person name="Toyoda A."/>
            <person name="Kuroki Y."/>
            <person name="Dewar K."/>
            <person name="Lloyd C."/>
            <person name="Itoh T."/>
            <person name="Takeda T."/>
            <person name="Kim D.-W."/>
            <person name="She X."/>
            <person name="Barlow K.F."/>
            <person name="Bloom T."/>
            <person name="Bruford E."/>
            <person name="Chang J.L."/>
            <person name="Cuomo C.A."/>
            <person name="Eichler E."/>
            <person name="FitzGerald M.G."/>
            <person name="Jaffe D.B."/>
            <person name="LaButti K."/>
            <person name="Nicol R."/>
            <person name="Park H.-S."/>
            <person name="Seaman C."/>
            <person name="Sougnez C."/>
            <person name="Yang X."/>
            <person name="Zimmer A.R."/>
            <person name="Zody M.C."/>
            <person name="Birren B.W."/>
            <person name="Nusbaum C."/>
            <person name="Fujiyama A."/>
            <person name="Hattori M."/>
            <person name="Rogers J."/>
            <person name="Lander E.S."/>
            <person name="Sakaki Y."/>
        </authorList>
    </citation>
    <scope>NUCLEOTIDE SEQUENCE [LARGE SCALE GENOMIC DNA]</scope>
</reference>
<reference key="4">
    <citation type="journal article" date="1994" name="Proc. Natl. Acad. Sci. U.S.A.">
        <title>Identification and overlapping expression of multiple unconventional myosin genes in vertebrate cell types.</title>
        <authorList>
            <person name="Bement W.M."/>
            <person name="Hasson T."/>
            <person name="Wirth J.A."/>
            <person name="Cheney R.E."/>
            <person name="Mooseker M.S."/>
        </authorList>
    </citation>
    <scope>NUCLEOTIDE SEQUENCE [MRNA] OF 166-196</scope>
    <source>
        <tissue>Epithelium</tissue>
        <tissue>Leukocyte</tissue>
        <tissue>Liver</tissue>
    </source>
</reference>
<reference key="5">
    <citation type="journal article" date="1994" name="Proc. Natl. Acad. Sci. U.S.A.">
        <authorList>
            <person name="Bement W.M."/>
            <person name="Hasson T."/>
            <person name="Wirth J.A."/>
            <person name="Cheney R.E."/>
            <person name="Mooseker M.S."/>
        </authorList>
    </citation>
    <scope>ERRATUM OF PUBMED:8022818</scope>
</reference>
<reference key="6">
    <citation type="journal article" date="1995" name="Proc. Natl. Acad. Sci. U.S.A.">
        <title>Expression in cochlea and retina of myosin VIIa, the gene product defective in Usher syndrome type 1B.</title>
        <authorList>
            <person name="Hasson T."/>
            <person name="Heintzelman M.B."/>
            <person name="Santos-Sacchi J."/>
            <person name="Corey D.P."/>
            <person name="Mooseker M.S."/>
        </authorList>
    </citation>
    <scope>NUCLEOTIDE SEQUENCE [MRNA] OF 1-1075</scope>
    <source>
        <tissue>Testis</tissue>
    </source>
</reference>
<reference key="7">
    <citation type="journal article" date="2000" name="Proc. Natl. Acad. Sci. U.S.A.">
        <title>Shotgun sequencing of the human transcriptome with ORF expressed sequence tags.</title>
        <authorList>
            <person name="Dias Neto E."/>
            <person name="Correa R.G."/>
            <person name="Verjovski-Almeida S."/>
            <person name="Briones M.R.S."/>
            <person name="Nagai M.A."/>
            <person name="da Silva W. Jr."/>
            <person name="Zago M.A."/>
            <person name="Bordin S."/>
            <person name="Costa F.F."/>
            <person name="Goldman G.H."/>
            <person name="Carvalho A.F."/>
            <person name="Matsukuma A."/>
            <person name="Baia G.S."/>
            <person name="Simpson D.H."/>
            <person name="Brunstein A."/>
            <person name="de Oliveira P.S.L."/>
            <person name="Bucher P."/>
            <person name="Jongeneel C.V."/>
            <person name="O'Hare M.J."/>
            <person name="Soares F."/>
            <person name="Brentani R.R."/>
            <person name="Reis L.F.L."/>
            <person name="de Souza S.J."/>
            <person name="Simpson A.J.G."/>
        </authorList>
    </citation>
    <scope>NUCLEOTIDE SEQUENCE [LARGE SCALE MRNA] OF 1-117 (ISOFORM 8)</scope>
</reference>
<reference key="8">
    <citation type="journal article" date="1995" name="Nature">
        <title>Defective myosin VIIA gene responsible for Usher syndrome type 1B.</title>
        <authorList>
            <person name="Weil D."/>
            <person name="Blanchard S."/>
            <person name="Kaplan J."/>
            <person name="Guilford P."/>
            <person name="Gibson F."/>
            <person name="Walsh J."/>
            <person name="Mburu P."/>
            <person name="Varela A."/>
            <person name="Levilliers J."/>
            <person name="Weston M.D."/>
            <person name="Kelley P.M."/>
            <person name="Kimberling W.J."/>
            <person name="Wagenaar M."/>
            <person name="Levi-Acobas F."/>
            <person name="Larget-Piet D."/>
            <person name="Munnich A."/>
            <person name="Steel K.P."/>
            <person name="Brown S.D.M."/>
            <person name="Petit C."/>
        </authorList>
    </citation>
    <scope>NUCLEOTIDE SEQUENCE [MRNA] OF 96-564 (ISOFORM 1)</scope>
    <scope>VARIANTS USH1B</scope>
    <source>
        <tissue>Retina</tissue>
    </source>
</reference>
<reference key="9">
    <citation type="journal article" date="1997" name="Genomics">
        <title>The genomic structure of the gene defective in Usher syndrome type Ib (MYO7A).</title>
        <authorList>
            <person name="Kelley P.M."/>
            <person name="Weston M.D."/>
            <person name="Chen Z.-Y."/>
            <person name="Orten D.J."/>
            <person name="Hasson T."/>
            <person name="Overbeck L.D."/>
            <person name="Pinnt J."/>
            <person name="Talmadge C.B."/>
            <person name="Ing P."/>
            <person name="Mooseker M.S."/>
            <person name="Corey D.P."/>
            <person name="Sumegi J."/>
            <person name="Kimberling W.J."/>
        </authorList>
    </citation>
    <scope>NUCLEOTIDE SEQUENCE [GENOMIC DNA] OF 79-578</scope>
</reference>
<reference key="10">
    <citation type="journal article" date="1996" name="Hum. Mol. Genet.">
        <title>Human Usher 1B/mouse shaker-1: the retinal phenotype discrepancy explained by the presence/absence of myosin VIIA in the photoreceptor cells.</title>
        <authorList>
            <person name="El-Amraoui A."/>
            <person name="Sahly I."/>
            <person name="Picaud S."/>
            <person name="Sahel J."/>
            <person name="Abitbol M."/>
            <person name="Petit C."/>
        </authorList>
    </citation>
    <scope>SUBCELLULAR LOCATION</scope>
    <scope>DEVELOPMENTAL STAGE</scope>
</reference>
<reference key="11">
    <citation type="journal article" date="2002" name="EMBO Rep.">
        <title>MyRIP, a novel Rab effector, enables myosin VIIa recruitment to retinal melanosomes.</title>
        <authorList>
            <person name="El-Amraoui A."/>
            <person name="Schonn J.-S."/>
            <person name="Kuessel-Andermann P."/>
            <person name="Blanchard S."/>
            <person name="Desnos C."/>
            <person name="Henry J.-P."/>
            <person name="Wolfrum U."/>
            <person name="Darchen F."/>
            <person name="Petit C."/>
        </authorList>
    </citation>
    <scope>INTERACTION WITH MYRIP</scope>
</reference>
<reference key="12">
    <citation type="journal article" date="2010" name="Invest. Ophthalmol. Vis. Sci.">
        <title>Function of MYO7A in the human RPE and the validity of shaker1 mice as a model for Usher syndrome 1B.</title>
        <authorList>
            <person name="Gibbs D."/>
            <person name="Diemer T."/>
            <person name="Khanobdee K."/>
            <person name="Hu J."/>
            <person name="Bok D."/>
            <person name="Williams D.S."/>
        </authorList>
    </citation>
    <scope>FUNCTION</scope>
    <scope>SUBCELLULAR LOCATION</scope>
    <scope>TISSUE SPECIFICITY</scope>
</reference>
<reference key="13">
    <citation type="journal article" date="2012" name="Cell. Mol. Life Sci.">
        <title>Functional characterization of the human myosin-7a motor domain.</title>
        <authorList>
            <person name="Heissler S.M."/>
            <person name="Manstein D.J."/>
        </authorList>
    </citation>
    <scope>FUNCTION</scope>
    <scope>ACTIVITY REGULATION</scope>
</reference>
<reference key="14">
    <citation type="journal article" date="2011" name="Hum. Mol. Genet.">
        <title>The Usher 1B protein, MYO7A, is required for normal localization and function of the visual retinoid cycle enzyme, RPE65.</title>
        <authorList>
            <person name="Lopes V.S."/>
            <person name="Gibbs D."/>
            <person name="Libby R.T."/>
            <person name="Aleman T.S."/>
            <person name="Welch D.L."/>
            <person name="Lillo C."/>
            <person name="Jacobson S.G."/>
            <person name="Radu R.A."/>
            <person name="Steel K.P."/>
            <person name="Williams D.S."/>
        </authorList>
    </citation>
    <scope>FUNCTION</scope>
    <scope>TISSUE SPECIFICITY</scope>
    <scope>INTERACTION WITH RPE65</scope>
</reference>
<reference key="15">
    <citation type="journal article" date="2011" name="Proc. Natl. Acad. Sci. U.S.A.">
        <title>Myosin VIIa and sans localization at stereocilia upper tip-link density implicates these Usher syndrome proteins in mechanotransduction.</title>
        <authorList>
            <person name="Grati M."/>
            <person name="Kachar B."/>
        </authorList>
    </citation>
    <scope>FUNCTION</scope>
    <scope>SUBCELLULAR LOCATION</scope>
    <scope>IDENTIFICATION IN A COMPLEX WITH USH1C AND USH1G</scope>
    <scope>TISSUE SPECIFICITY</scope>
</reference>
<reference key="16">
    <citation type="journal article" date="2012" name="Nat. Genet.">
        <title>Alterations of the CIB2 calcium- and integrin-binding protein cause Usher syndrome type 1J and nonsyndromic deafness DFNB48.</title>
        <authorList>
            <person name="Riazuddin S."/>
            <person name="Belyantseva I.A."/>
            <person name="Giese A.P."/>
            <person name="Lee K."/>
            <person name="Indzhykulian A.A."/>
            <person name="Nandamuri S.P."/>
            <person name="Yousaf R."/>
            <person name="Sinha G.P."/>
            <person name="Lee S."/>
            <person name="Terrell D."/>
            <person name="Hegde R.S."/>
            <person name="Ali R.A."/>
            <person name="Anwar S."/>
            <person name="Andrade-Elizondo P.B."/>
            <person name="Sirmaci A."/>
            <person name="Parise L.V."/>
            <person name="Basit S."/>
            <person name="Wali A."/>
            <person name="Ayub M."/>
            <person name="Ansar M."/>
            <person name="Ahmad W."/>
            <person name="Khan S.N."/>
            <person name="Akram J."/>
            <person name="Tekin M."/>
            <person name="Riazuddin S."/>
            <person name="Cook T."/>
            <person name="Buschbeck E.K."/>
            <person name="Frolenkov G.I."/>
            <person name="Leal S.M."/>
            <person name="Friedman T.B."/>
            <person name="Ahmed Z.M."/>
        </authorList>
    </citation>
    <scope>INTERACTION WITH CIB2</scope>
</reference>
<reference key="17">
    <citation type="journal article" date="2014" name="J. Biol. Chem.">
        <title>Stable single alpha-helices are constant force springs in proteins.</title>
        <authorList>
            <person name="Wolny M."/>
            <person name="Batchelor M."/>
            <person name="Knight P.J."/>
            <person name="Paci E."/>
            <person name="Dougan L."/>
            <person name="Peckham M."/>
        </authorList>
    </citation>
    <scope>SAH DOMAIN</scope>
</reference>
<reference key="18">
    <citation type="journal article" date="2016" name="Elife">
        <title>The E3 ligase Ubr3 regulates Usher syndrome and MYH9 disorder proteins in the auditory organs of Drosophila and mammals.</title>
        <authorList>
            <person name="Li T."/>
            <person name="Giagtzoglou N."/>
            <person name="Eberl D.F."/>
            <person name="Jaiswal S.N."/>
            <person name="Cai T."/>
            <person name="Godt D."/>
            <person name="Groves A.K."/>
            <person name="Bellen H.J."/>
        </authorList>
    </citation>
    <scope>INTERACTION WITH MYH9</scope>
    <scope>SUBCELLULAR LOCATION</scope>
</reference>
<reference key="19">
    <citation type="journal article" date="2020" name="J. Biol. Chem.">
        <title>The small EF-hand protein CALML4 functions as a critical myosin light chain within the intermicrovillar adhesion complex.</title>
        <authorList>
            <person name="Choi M.S."/>
            <person name="Graves M.J."/>
            <person name="Matoo S."/>
            <person name="Storad Z.A."/>
            <person name="El Sheikh Idris R.A."/>
            <person name="Weck M.L."/>
            <person name="Smith Z.B."/>
            <person name="Tyska M.J."/>
            <person name="Crawley S.W."/>
        </authorList>
    </citation>
    <scope>INTERACTION WITH CALML4</scope>
</reference>
<reference key="20">
    <citation type="journal article" date="1996" name="Am. J. Hum. Genet.">
        <title>Myosin VIIA mutation screening in 189 Usher syndrome type 1 patients.</title>
        <authorList>
            <person name="Weston M.D."/>
            <person name="Kelley P.M."/>
            <person name="Overbeck L.D."/>
            <person name="Wagenaar M."/>
            <person name="Orten D.J."/>
            <person name="Hasson T."/>
            <person name="Chen Z.-Y."/>
            <person name="Corey D.P."/>
            <person name="Mooseker M.S."/>
            <person name="Sumegi J."/>
            <person name="Cremers C."/>
            <person name="Moeller C."/>
            <person name="Jacobson S.G."/>
            <person name="Gorin M.B."/>
            <person name="Kimberling W.J."/>
        </authorList>
    </citation>
    <scope>VARIANTS USH1B CYS-212; HIS-212; GLN-450; GLN-468 INS AND LEU-503</scope>
    <scope>VARIANT HIS-302</scope>
</reference>
<reference key="21">
    <citation type="journal article" date="1997" name="Am. J. Hum. Genet.">
        <title>Mutation profile of all 49 exons of the human myosin VIIA gene, and haplotype analysis, in Usher 1B families from diverse origins.</title>
        <authorList>
            <person name="Adato A."/>
            <person name="Weil D."/>
            <person name="Kalinski H."/>
            <person name="Pel-Or Y."/>
            <person name="Ayadi H."/>
            <person name="Petit C."/>
            <person name="Korostishevsky M."/>
            <person name="Bonne-Tamir B."/>
        </authorList>
    </citation>
    <scope>VARIANTS USH1B ARG-214; ASP-397 AND THR-826</scope>
    <scope>POLYMORPHISM</scope>
</reference>
<reference key="22">
    <citation type="journal article" date="1997" name="Hum. Mol. Genet.">
        <title>Myosin VIIA gene: heterogeneity of the mutations responsible for Usher syndrome type IB.</title>
        <authorList>
            <person name="Levy G."/>
            <person name="Levi-Acobas F."/>
            <person name="Blanchard S."/>
            <person name="Gerber S."/>
            <person name="Larget-Piet D."/>
            <person name="Chenal V."/>
            <person name="Liu X.-Z."/>
            <person name="Newton V."/>
            <person name="Steel K.P."/>
            <person name="Brown S.D.M."/>
            <person name="Munnich A."/>
            <person name="Kaplan J."/>
            <person name="Petit C."/>
            <person name="Weil D."/>
        </authorList>
    </citation>
    <scope>VARIANTS USH1B ARG-25; SER-955 AND GLU-2137</scope>
    <scope>POLYMORPHISM</scope>
</reference>
<reference key="23">
    <citation type="journal article" date="1997" name="Nat. Genet.">
        <title>Mutations in the myosin VIIA gene cause non-syndromic recessive deafness.</title>
        <authorList>
            <person name="Liu X.-Z."/>
            <person name="Walsh J."/>
            <person name="Mburu P."/>
            <person name="Kendrick-Jones J."/>
            <person name="Cope M.J."/>
            <person name="Steel K.P."/>
            <person name="Brown S.D.M."/>
        </authorList>
    </citation>
    <scope>VARIANT DFNB2 PRO-244</scope>
</reference>
<reference key="24">
    <citation type="journal article" date="1997" name="Nat. Genet.">
        <title>The autosomal recessive isolated deafness, DFNB2, and the Usher 1B syndrome are allelic defects of the myosin-VIIA gene.</title>
        <authorList>
            <person name="Weil D."/>
            <person name="Kuessel P."/>
            <person name="Blanchard S."/>
            <person name="Levy G."/>
            <person name="Levi-Acobas F."/>
            <person name="Drira M."/>
            <person name="Ayadi H."/>
            <person name="Petit C."/>
        </authorList>
    </citation>
    <scope>VARIANT DFNB2 ILE-599</scope>
</reference>
<reference key="25">
    <citation type="journal article" date="1997" name="Nat. Genet.">
        <title>Autosomal dominant non-syndromic deafness caused by a mutation in the myosin VIIA gene.</title>
        <authorList>
            <person name="Liu X.-Z."/>
            <person name="Walsh J."/>
            <person name="Tamagawa Y."/>
            <person name="Kitamura K."/>
            <person name="Nishizawa M."/>
            <person name="Steel K.P."/>
            <person name="Brown S.D.M."/>
        </authorList>
    </citation>
    <scope>VARIANT DFNA11 886-ALA--LYS-888 DEL</scope>
</reference>
<reference key="26">
    <citation type="journal article" date="1998" name="Am. J. Hum. Genet.">
        <title>Mutations in the myosin VIIA gene cause a wide phenotypic spectrum, including atypical Usher syndrome.</title>
        <authorList>
            <person name="Liu X.-Z."/>
            <person name="Hope C."/>
            <person name="Walsh J."/>
            <person name="Newton V."/>
            <person name="Ke X.M."/>
            <person name="Liang C.Y."/>
            <person name="Xu L.R."/>
            <person name="Zhou J.M."/>
            <person name="Trump D."/>
            <person name="Steel K.P."/>
            <person name="Bundey S."/>
            <person name="Brown S.D.M."/>
        </authorList>
    </citation>
    <scope>VARIANTS USH1B PRO-651 AND GLN-1602</scope>
</reference>
<reference key="27">
    <citation type="journal article" date="1999" name="Am. J. Hum. Genet.">
        <title>Possible interaction between USH1B and USH3 gene products as implied by apparent digenic deafness inheritance.</title>
        <authorList>
            <person name="Adato A."/>
            <person name="Kalinski H."/>
            <person name="Weil D."/>
            <person name="Chaib H."/>
            <person name="Korostishevsky M."/>
            <person name="Bonne-Tamir B."/>
        </authorList>
    </citation>
    <scope>VARIANT USH1B PRO-1087</scope>
</reference>
<reference key="28">
    <citation type="journal article" date="1999" name="Hum. Mutat.">
        <title>Twelve novel myosin VIIA mutations in 34 patients with Usher syndrome type I: confirmation of genetic heterogeneity.</title>
        <authorList>
            <person name="Janecke A.R."/>
            <person name="Meins M."/>
            <person name="Sadeghi M."/>
            <person name="Grundmann K."/>
            <person name="Apfelstedt-Sylla E."/>
            <person name="Zrenner E."/>
            <person name="Rosenberg T."/>
            <person name="Gal A."/>
        </authorList>
    </citation>
    <scope>POLYMORPHISM</scope>
    <scope>VARIANTS USH1B SER-241; SER-1343; SER-1628 AND SER-2163</scope>
</reference>
<reference key="29">
    <citation type="journal article" date="1999" name="Hum. Mutat.">
        <title>Identification of three novel mutations in the MYO7A gene.</title>
        <authorList>
            <person name="Cuevas J.M."/>
            <person name="Espinos C."/>
            <person name="Millan J.M."/>
            <person name="Sanchez F."/>
            <person name="Trujillo M.J."/>
            <person name="Ayuso C."/>
            <person name="Beneyto M."/>
            <person name="Najera C."/>
        </authorList>
    </citation>
    <scope>VARIANT USH1B LYS-1170</scope>
    <scope>VARIANT CYS-1719</scope>
</reference>
<reference key="30">
    <citation type="journal article" date="2000" name="Exp. Eye Res.">
        <title>Evaluation of the myosin VIIA gene and visual function in patients with Usher syndrome type I.</title>
        <authorList>
            <person name="Bharadwaj A.K."/>
            <person name="Kasztejna J.P."/>
            <person name="Huq S."/>
            <person name="Berson E.L."/>
            <person name="Dryja T.P."/>
        </authorList>
    </citation>
    <scope>VARIANTS USH1B GLU-26; MET-67; PRO-90; ASN-134; CYS-241; LYS-269 DEL; VAL-457; ASP-519; ASP-968; GLN-1240; PRO-1288; PHE-1346 DEL; TRP-1743; PRO-1858; LEU-1887 AND ASP-2187</scope>
</reference>
<reference key="31">
    <citation type="journal article" date="2002" name="Hum. Mutat.">
        <title>Mutations in myosin VIIA (MYO7A) and usherin (USH2A) in Spanish patients with Usher syndrome types I and II, respectively.</title>
        <authorList>
            <person name="Najera C."/>
            <person name="Beneyto M."/>
            <person name="Blanca J."/>
            <person name="Aller E."/>
            <person name="Fontcuberta A."/>
            <person name="Millan J.M."/>
            <person name="Ayuso C."/>
        </authorList>
    </citation>
    <scope>VARIANTS USH1B ASP-397; LYS-1170; LYS-1327 AND 1347-ARG--PHE-1351 DEL</scope>
    <scope>VARIANTS MET-1566 AND CYS-1719</scope>
</reference>
<reference key="32">
    <citation type="journal article" date="2004" name="Hum. Genet.">
        <title>Identification and molecular modelling of a mutation in the motor head domain of myosin VIIA in a family with autosomal dominant hearing impairment (DFNA11).</title>
        <authorList>
            <person name="Luijendijk M.W.J."/>
            <person name="Van Wijk E."/>
            <person name="Bischoff A.M.L.C."/>
            <person name="Krieger E."/>
            <person name="Huygen P.L.M."/>
            <person name="Pennings R.J.E."/>
            <person name="Brunner H.G."/>
            <person name="Cremers C.W.R.J."/>
            <person name="Cremers F.P.M."/>
            <person name="Kremer H."/>
        </authorList>
    </citation>
    <scope>VARIANT DFNA11 ILE-458</scope>
</reference>
<reference key="33">
    <citation type="journal article" date="2004" name="Hum. Mutat.">
        <title>Impaired calmodulin binding of myosin-7A causes autosomal dominant hearing loss (DFNA11).</title>
        <authorList>
            <person name="Bolz H."/>
            <person name="Bolz S.-S."/>
            <person name="Schade G."/>
            <person name="Kothe C."/>
            <person name="Mohrmann G."/>
            <person name="Hess M."/>
            <person name="Gal A."/>
        </authorList>
    </citation>
    <scope>VARIANT DFNA11 CYS-853</scope>
    <scope>INTERACTION WITH CALM</scope>
    <scope>CHARACTERIZATION OF VARIANT DFNA11 CYS-853</scope>
</reference>
<reference key="34">
    <citation type="journal article" date="2004" name="J. Med. Genet.">
        <title>Modifier controls severity of a novel dominant low-frequency MyosinVIIA (MYO7A) auditory mutation.</title>
        <authorList>
            <person name="Street V.A."/>
            <person name="Kallman J.C."/>
            <person name="Kiemele K.L."/>
        </authorList>
    </citation>
    <scope>VARIANT DFNA11 ARG-722</scope>
</reference>
<reference key="35">
    <citation type="journal article" date="2005" name="Hum. Genet.">
        <title>Characterization of Usher syndrome type I gene mutations in an Usher syndrome patient population.</title>
        <authorList>
            <person name="Ouyang X.M."/>
            <person name="Yan D."/>
            <person name="Du L.L."/>
            <person name="Hejtmancik J.F."/>
            <person name="Jacobson S.G."/>
            <person name="Nance W.E."/>
            <person name="Li A.R."/>
            <person name="Angeli S."/>
            <person name="Kaiser M."/>
            <person name="Newton V."/>
            <person name="Brown S.D.M."/>
            <person name="Balkany T."/>
            <person name="Liu X.Z."/>
        </authorList>
    </citation>
    <scope>VARIANTS USH1B ARG-25; MET-165; TRP-756; ASP-968 AND GLN-1883</scope>
    <scope>VARIANT SER-16</scope>
</reference>
<reference key="36">
    <citation type="journal article" date="2006" name="J. Med. Genet.">
        <title>Survey of the frequency of USH1 gene mutations in a cohort of Usher patients shows the importance of cadherin 23 and protocadherin 15 genes and establishes a detection rate of above 90%.</title>
        <authorList>
            <person name="Roux A.-F."/>
            <person name="Faugere V."/>
            <person name="Le Guedard S."/>
            <person name="Pallares-Ruiz N."/>
            <person name="Vielle A."/>
            <person name="Chambert S."/>
            <person name="Marlin S."/>
            <person name="Hamel C."/>
            <person name="Gilbert B."/>
            <person name="Malcolm S."/>
            <person name="Claustres M."/>
        </authorList>
    </citation>
    <scope>VARIANTS USH1B ASP-133; ARG-163; ARG-164; MET-165; THR-198; ALA-204; ASP-519; LYS-1170; GLN-1240; PRO-1858; TRP-1873 AND PHE-1962 DEL</scope>
    <scope>VARIANTS MET-1566 AND CYS-1719</scope>
</reference>
<reference key="37">
    <citation type="journal article" date="2011" name="Hum. Mutat.">
        <title>Whole-exome sequencing identifies ALMS1, IQCB1, CNGA3, and MYO7A mutations in patients with Leber congenital amaurosis.</title>
        <authorList>
            <person name="Wang X."/>
            <person name="Wang H."/>
            <person name="Cao M."/>
            <person name="Li Z."/>
            <person name="Chen X."/>
            <person name="Patenia C."/>
            <person name="Gore A."/>
            <person name="Abboud E.B."/>
            <person name="Al-Rajhi A.A."/>
            <person name="Lewis A.R."/>
            <person name="Lupski J.R."/>
            <person name="Mardon G."/>
            <person name="Zhang K."/>
            <person name="Muzny D."/>
            <person name="Gibbs R.A."/>
            <person name="Chen R."/>
        </authorList>
    </citation>
    <scope>VARIANT ILE-193</scope>
</reference>
<reference key="38">
    <citation type="journal article" date="2013" name="Mol. Vis.">
        <title>Novel compound heterozygous mutations in MYO7A in a Chinese family with Usher syndrome type 1.</title>
        <authorList>
            <person name="Liu F."/>
            <person name="Li P."/>
            <person name="Liu Y."/>
            <person name="Li W."/>
            <person name="Wong F."/>
            <person name="Du R."/>
            <person name="Wang L."/>
            <person name="Li C."/>
            <person name="Jiang F."/>
            <person name="Tang Z."/>
            <person name="Liu M."/>
        </authorList>
    </citation>
    <scope>INVOLVEMENT IN USH1B</scope>
    <scope>VARIANT USH1B LYS-1248</scope>
</reference>
<reference key="39">
    <citation type="journal article" date="2014" name="PLoS ONE">
        <title>Novel and recurrent MYO7A mutations in Usher syndrome type 1 and type 2.</title>
        <authorList>
            <person name="Rong W."/>
            <person name="Chen X."/>
            <person name="Zhao K."/>
            <person name="Liu Y."/>
            <person name="Liu X."/>
            <person name="Ha S."/>
            <person name="Liu W."/>
            <person name="Kang X."/>
            <person name="Sheng X."/>
            <person name="Zhao C."/>
        </authorList>
    </citation>
    <scope>VARIANTS USH1B MET-165 AND ARG-946</scope>
</reference>
<reference key="40">
    <citation type="journal article" date="2015" name="Invest. Ophthalmol. Vis. Sci.">
        <title>Exome Sequencing Reveals AGBL5 as Novel Candidate Gene and Additional Variants for Retinitis Pigmentosa in Five Turkish Families.</title>
        <authorList>
            <person name="Kastner S."/>
            <person name="Thiemann I.J."/>
            <person name="Dekomien G."/>
            <person name="Petrasch-Parwez E."/>
            <person name="Schreiber S."/>
            <person name="Akkad D.A."/>
            <person name="Gerding W.M."/>
            <person name="Hoffjan S."/>
            <person name="Guenes S."/>
            <person name="Guenes S."/>
            <person name="Bagci H."/>
            <person name="Epplen J.T."/>
        </authorList>
    </citation>
    <scope>VARIANT ARG-158</scope>
</reference>
<reference key="41">
    <citation type="journal article" date="2015" name="PLoS ONE">
        <title>Whole exome sequencing identifies mutations in Usher syndrome genes in profoundly deaf Tunisian patients.</title>
        <authorList>
            <person name="Riahi Z."/>
            <person name="Bonnet C."/>
            <person name="Zainine R."/>
            <person name="Lahbib S."/>
            <person name="Bouyacoub Y."/>
            <person name="Bechraoui R."/>
            <person name="Marrakchi J."/>
            <person name="Hardelin J.P."/>
            <person name="Louha M."/>
            <person name="Largueche L."/>
            <person name="Ben Yahia S."/>
            <person name="Kheirallah M."/>
            <person name="Elmatri L."/>
            <person name="Besbes G."/>
            <person name="Abdelhak S."/>
            <person name="Petit C."/>
        </authorList>
    </citation>
    <scope>VARIANT USH1B LYS-1812</scope>
</reference>
<reference key="42">
    <citation type="journal article" date="2017" name="Genet. Test. Mol. Biomarkers">
        <title>Molecular Analysis of Twelve Pakistani Families with Nonsyndromic or Syndromic Hearing Loss.</title>
        <authorList>
            <person name="Wang R."/>
            <person name="Han S."/>
            <person name="Khan A."/>
            <person name="Zhang X."/>
        </authorList>
    </citation>
    <scope>VARIANT DFNB2 ARG-652</scope>
</reference>
<reference key="43">
    <citation type="journal article" date="2017" name="Hum. Mutat.">
        <title>Mutations in KARS cause early-onset hearing loss and leukoencephalopathy: Potential pathogenic mechanism.</title>
        <authorList>
            <person name="Zhou X.L."/>
            <person name="He L.X."/>
            <person name="Yu L.J."/>
            <person name="Wang Y."/>
            <person name="Wang X.J."/>
            <person name="Wang E.D."/>
            <person name="Yang T."/>
        </authorList>
    </citation>
    <scope>VARIANT GLN-1602</scope>
</reference>
<name>MYO7A_HUMAN</name>
<proteinExistence type="evidence at protein level"/>